<sequence length="959" mass="106489">MAASTGYVRLWGAARCWVLRRPMLAAAGGRVPTAAGAWLLRGQRTCDASPPWALWGRGPAIGGQWRGFWEASSRGGGAFSGGEDASEGGAEEGAGGAGGSAGAGEGPVITALTPMTIPDVFPHLPLIAITRNPVFPRFIKIIEVKNKKLVELLRRKVRLAQPYVGVFLKRDDSNESDVVESLDEIYHTGTFAQIHEMQDLGDKLRMIVMGHRRVHISRQLEVEPEEPEAENKHKPRRKSKRGKKEAEDELSARHPAELAMEPTPELPAEVLMVEVENVVHEDFQVTEEVKALTAEIVKTIRDIIALNPLYRESVLQMMQAGQRVVDNPIYLSDMGAALTGAESHELQDVLEETNIPKRLYKALSLLKKEFELSKLQQRLGREVEEKIKQTHRKYLLQEQLKIIKKELGLEKDDKDAIEEKFRERLKELVVPKHVMDVVDEELSKLGLLDNHSSEFNVTRNYLDWLTSIPWGKYSNENLDLARAQAVLEEDHYGMEDVKKRILEFIAVSQLRGSTQGKILCFYGPPGVGKTSIARSIARALNREYFRFSVGGMTDVAEIKGHRRTYVGAMPGKIIQCLKKTKTENPLILIDEVDKIGRGYQGDPSSALLELLDPEQNANFLDHYLDVPVDLSKVLFICTANVTDTIPEPLRDRMEMINVSGYVAQEKLAIAERYLVPQARALCGLDESKAKLSSDVLTLLIKQYCRESGVRNLQKQVEKVLRKSAYKIVSGEAESVEVTPENLQDFVGKPVFTVERMYDVTPPGVVMGLAWTAMGGSTLFVETSLRRPQDKDAKGDKDGSLEVTGQLGEVMKESARIAYTFARAFLMQHAPANDYLVTSHIHLHVPEGATPKDGPSAGCTIVTALLSLAMGRPVRQNLAMTGEVSLTGKILPVGGIKEKTIAAKRAGVTCIVLPAENKKDFYDLAAFITEGLEVHFVEHYREIFDIAFPDEQAEALAVER</sequence>
<feature type="transit peptide" description="Mitochondrion" evidence="1 25">
    <location>
        <begin position="1"/>
        <end position="67"/>
    </location>
</feature>
<feature type="chain" id="PRO_0000026734" description="Lon protease homolog, mitochondrial">
    <location>
        <begin position="68"/>
        <end position="959"/>
    </location>
</feature>
<feature type="domain" description="Lon N-terminal" evidence="3">
    <location>
        <begin position="124"/>
        <end position="370"/>
    </location>
</feature>
<feature type="domain" description="Lon proteolytic" evidence="2">
    <location>
        <begin position="759"/>
        <end position="949"/>
    </location>
</feature>
<feature type="region of interest" description="Disordered" evidence="4">
    <location>
        <begin position="77"/>
        <end position="102"/>
    </location>
</feature>
<feature type="region of interest" description="Disordered" evidence="4">
    <location>
        <begin position="218"/>
        <end position="257"/>
    </location>
</feature>
<feature type="compositionally biased region" description="Gly residues" evidence="4">
    <location>
        <begin position="91"/>
        <end position="102"/>
    </location>
</feature>
<feature type="compositionally biased region" description="Basic residues" evidence="4">
    <location>
        <begin position="233"/>
        <end position="243"/>
    </location>
</feature>
<feature type="compositionally biased region" description="Basic and acidic residues" evidence="4">
    <location>
        <begin position="244"/>
        <end position="256"/>
    </location>
</feature>
<feature type="active site" evidence="1">
    <location>
        <position position="855"/>
    </location>
</feature>
<feature type="active site" evidence="1">
    <location>
        <position position="898"/>
    </location>
</feature>
<feature type="binding site" evidence="1">
    <location>
        <begin position="523"/>
        <end position="530"/>
    </location>
    <ligand>
        <name>ATP</name>
        <dbReference type="ChEBI" id="CHEBI:30616"/>
    </ligand>
</feature>
<feature type="splice variant" id="VSP_055310" description="In isoform 3." evidence="22">
    <location>
        <begin position="1"/>
        <end position="196"/>
    </location>
</feature>
<feature type="splice variant" id="VSP_054617" description="In isoform 2." evidence="22">
    <location>
        <begin position="42"/>
        <end position="105"/>
    </location>
</feature>
<feature type="sequence variant" id="VAR_051564" description="In dbSNP:rs34413649.">
    <original>E</original>
    <variation>D</variation>
    <location>
        <position position="87"/>
    </location>
</feature>
<feature type="sequence variant" id="VAR_051565" description="In dbSNP:rs11085147.">
    <original>R</original>
    <variation>Q</variation>
    <location>
        <position position="241"/>
    </location>
</feature>
<feature type="sequence variant" id="VAR_073338" description="In CODASS." evidence="15">
    <original>E</original>
    <variation>A</variation>
    <location>
        <position position="476"/>
    </location>
</feature>
<feature type="sequence variant" id="VAR_073339" description="In CODASS; dbSNP:rs879255248." evidence="14">
    <original>S</original>
    <variation>Y</variation>
    <location>
        <position position="631"/>
    </location>
</feature>
<feature type="sequence variant" id="VAR_073340" description="In CODASS; dbSNP:rs770036526." evidence="15">
    <original>A</original>
    <variation>V</variation>
    <location>
        <position position="670"/>
    </location>
</feature>
<feature type="sequence variant" id="VAR_073341" description="In CODASS; dbSNP:rs777009012." evidence="15">
    <original>R</original>
    <variation>C</variation>
    <location>
        <position position="672"/>
    </location>
</feature>
<feature type="sequence variant" id="VAR_073342" description="In CODASS; dbSNP:rs879255247." evidence="14">
    <original>P</original>
    <variation>S</variation>
    <location>
        <position position="676"/>
    </location>
</feature>
<feature type="sequence variant" id="VAR_073343" description="In CODASS; dbSNP:rs549574673." evidence="15">
    <original>R</original>
    <variation>H</variation>
    <location>
        <position position="679"/>
    </location>
</feature>
<feature type="sequence variant" id="VAR_073344" description="In CODASS; dbSNP:rs147588238." evidence="14">
    <original>R</original>
    <variation>G</variation>
    <location>
        <position position="721"/>
    </location>
</feature>
<feature type="sequence variant" id="VAR_073345" description="In CODASS; dbSNP:rs879255249." evidence="14">
    <original>A</original>
    <variation>V</variation>
    <location>
        <position position="724"/>
    </location>
</feature>
<feature type="sequence variant" id="VAR_073346" description="In CODASS; dbSNP:rs2145578983." evidence="15">
    <original>P</original>
    <variation>S</variation>
    <location>
        <position position="749"/>
    </location>
</feature>
<feature type="sequence variant" id="VAR_073347" description="In CODASS; dbSNP:rs562553348." evidence="15">
    <original>G</original>
    <variation>E</variation>
    <location>
        <position position="767"/>
    </location>
</feature>
<feature type="sequence variant" id="VAR_067708" description="In dbSNP:rs35804229.">
    <original>A</original>
    <variation>T</variation>
    <location>
        <position position="829"/>
    </location>
</feature>
<feature type="sequence variant" id="VAR_067709" description="In dbSNP:rs1062373." evidence="11 20">
    <original>V</original>
    <variation>I</variation>
    <location>
        <position position="911"/>
    </location>
</feature>
<feature type="sequence variant" id="VAR_073348" description="In CODASS." evidence="15">
    <location>
        <position position="927"/>
    </location>
</feature>
<feature type="mutagenesis site" description="Abolishes ATPase activity, and presumably ATP-driven protein unfolding, but does not block access to the proteolytic active site or prevent a substrate from binding to it." evidence="12">
    <original>K</original>
    <variation>R</variation>
    <location>
        <position position="529"/>
    </location>
</feature>
<feature type="mutagenesis site" description="Has low basal, but normal stimulated ATPase activity, and retains peptidase activity." evidence="12">
    <original>W</original>
    <variation>A</variation>
    <location>
        <position position="770"/>
    </location>
</feature>
<feature type="mutagenesis site" description="Has normal basal, but low stimulated ATPase activity, and abolishes peptidase activity." evidence="12">
    <original>W</original>
    <variation>P</variation>
    <location>
        <position position="770"/>
    </location>
</feature>
<feature type="mutagenesis site" description="Lacks both ATPase and protease activity, but retains DNA binding activity." evidence="6 12">
    <original>S</original>
    <variation>A</variation>
    <location>
        <position position="855"/>
    </location>
</feature>
<feature type="mutagenesis site" description="Enhances the basal, but not the stimulated ATPase activity." evidence="12">
    <original>T</original>
    <variation>V</variation>
    <location>
        <position position="880"/>
    </location>
</feature>
<feature type="mutagenesis site" description="Has low basal, but normal stimulated ATPase activity, and retains peptidase activity." evidence="12">
    <original>G</original>
    <variation>A</variation>
    <location>
        <position position="893"/>
    </location>
</feature>
<feature type="mutagenesis site" description="Has normal basal, but low stimulated ATPase activity, and abolishes peptidase activity." evidence="12">
    <original>G</original>
    <variation>P</variation>
    <location>
        <position position="893"/>
    </location>
</feature>
<feature type="mutagenesis site" description="Enhances the basal, but not the stimulated ATPase activity, and retains peptidase activity." evidence="12">
    <original>G</original>
    <variation>A</variation>
    <variation>S</variation>
    <location>
        <position position="894"/>
    </location>
</feature>
<feature type="mutagenesis site" description="Enhances the basal, but not the stimulated ATPase activity, and abolishes peptidase activity." evidence="12">
    <original>G</original>
    <variation>P</variation>
    <location>
        <position position="894"/>
    </location>
</feature>
<feature type="sequence conflict" description="In Ref. 1; AAA61616." evidence="23" ref="1">
    <original>MAASTGYVRLWGAARCWVLRRPMLAAAGGRVPTAAGAWLLRGQRTCDASPPWALW</original>
    <variation>MAGLWRRALATCDCGERRGAGCCGGRCWPRRGAGSHCSRSVVAPRPADLRRLSSLGTV</variation>
    <location>
        <begin position="1"/>
        <end position="55"/>
    </location>
</feature>
<feature type="sequence conflict" description="In Ref. 1; AAA61616." evidence="23" ref="1">
    <original>WR</original>
    <variation>CG</variation>
    <location>
        <begin position="65"/>
        <end position="66"/>
    </location>
</feature>
<feature type="sequence conflict" description="In Ref. 1; AAA61616." evidence="23" ref="1">
    <original>EL</original>
    <variation>DV</variation>
    <location>
        <begin position="257"/>
        <end position="258"/>
    </location>
</feature>
<feature type="sequence conflict" description="In Ref. 4; BAG51690." evidence="23" ref="4">
    <original>E</original>
    <variation>G</variation>
    <location>
        <position position="423"/>
    </location>
</feature>
<feature type="sequence conflict" description="In Ref. 1; AAA61616." evidence="23" ref="1">
    <original>N</original>
    <variation>D</variation>
    <location>
        <position position="456"/>
    </location>
</feature>
<feature type="sequence conflict" description="In Ref. 4; BAG51690." evidence="23" ref="4">
    <original>I</original>
    <variation>V</variation>
    <location>
        <position position="501"/>
    </location>
</feature>
<feature type="sequence conflict" description="In Ref. 1; AAA61616." evidence="23" ref="1">
    <original>A</original>
    <variation>T</variation>
    <location>
        <position position="556"/>
    </location>
</feature>
<feature type="sequence conflict" description="In Ref. 1; AAA61616." evidence="23" ref="1">
    <original>L</original>
    <variation>P</variation>
    <location>
        <position position="842"/>
    </location>
</feature>
<feature type="sequence conflict" description="In Ref. 1; AAA61616." evidence="23" ref="1">
    <original>T</original>
    <variation>A</variation>
    <location>
        <position position="859"/>
    </location>
</feature>
<feature type="strand" evidence="33">
    <location>
        <begin position="140"/>
        <end position="142"/>
    </location>
</feature>
<feature type="helix" evidence="33">
    <location>
        <begin position="148"/>
        <end position="155"/>
    </location>
</feature>
<feature type="strand" evidence="33">
    <location>
        <begin position="156"/>
        <end position="161"/>
    </location>
</feature>
<feature type="strand" evidence="33">
    <location>
        <begin position="167"/>
        <end position="169"/>
    </location>
</feature>
<feature type="helix" evidence="33">
    <location>
        <begin position="175"/>
        <end position="180"/>
    </location>
</feature>
<feature type="strand" evidence="33">
    <location>
        <begin position="184"/>
        <end position="193"/>
    </location>
</feature>
<feature type="strand" evidence="33">
    <location>
        <begin position="200"/>
        <end position="203"/>
    </location>
</feature>
<feature type="strand" evidence="33">
    <location>
        <begin position="206"/>
        <end position="208"/>
    </location>
</feature>
<feature type="strand" evidence="33">
    <location>
        <begin position="212"/>
        <end position="215"/>
    </location>
</feature>
<feature type="helix" evidence="33">
    <location>
        <begin position="291"/>
        <end position="306"/>
    </location>
</feature>
<feature type="helix" evidence="33">
    <location>
        <begin position="313"/>
        <end position="317"/>
    </location>
</feature>
<feature type="helix" evidence="33">
    <location>
        <begin position="320"/>
        <end position="322"/>
    </location>
</feature>
<feature type="helix" evidence="33">
    <location>
        <begin position="328"/>
        <end position="337"/>
    </location>
</feature>
<feature type="helix" evidence="33">
    <location>
        <begin position="343"/>
        <end position="351"/>
    </location>
</feature>
<feature type="helix" evidence="33">
    <location>
        <begin position="355"/>
        <end position="406"/>
    </location>
</feature>
<feature type="turn" evidence="34">
    <location>
        <begin position="408"/>
        <end position="410"/>
    </location>
</feature>
<feature type="helix" evidence="31">
    <location>
        <begin position="413"/>
        <end position="427"/>
    </location>
</feature>
<feature type="helix" evidence="31">
    <location>
        <begin position="432"/>
        <end position="447"/>
    </location>
</feature>
<feature type="strand" evidence="30">
    <location>
        <begin position="450"/>
        <end position="452"/>
    </location>
</feature>
<feature type="helix" evidence="31">
    <location>
        <begin position="453"/>
        <end position="467"/>
    </location>
</feature>
<feature type="helix" evidence="31">
    <location>
        <begin position="480"/>
        <end position="490"/>
    </location>
</feature>
<feature type="helix" evidence="31">
    <location>
        <begin position="495"/>
        <end position="511"/>
    </location>
</feature>
<feature type="strand" evidence="31">
    <location>
        <begin position="518"/>
        <end position="522"/>
    </location>
</feature>
<feature type="strand" evidence="33">
    <location>
        <begin position="525"/>
        <end position="528"/>
    </location>
</feature>
<feature type="helix" evidence="31">
    <location>
        <begin position="529"/>
        <end position="540"/>
    </location>
</feature>
<feature type="strand" evidence="31">
    <location>
        <begin position="544"/>
        <end position="548"/>
    </location>
</feature>
<feature type="helix" evidence="31">
    <location>
        <begin position="556"/>
        <end position="559"/>
    </location>
</feature>
<feature type="strand" evidence="30">
    <location>
        <begin position="565"/>
        <end position="567"/>
    </location>
</feature>
<feature type="helix" evidence="31">
    <location>
        <begin position="572"/>
        <end position="580"/>
    </location>
</feature>
<feature type="strand" evidence="33">
    <location>
        <begin position="582"/>
        <end position="584"/>
    </location>
</feature>
<feature type="strand" evidence="31">
    <location>
        <begin position="586"/>
        <end position="590"/>
    </location>
</feature>
<feature type="helix" evidence="31">
    <location>
        <begin position="592"/>
        <end position="594"/>
    </location>
</feature>
<feature type="strand" evidence="31">
    <location>
        <begin position="599"/>
        <end position="601"/>
    </location>
</feature>
<feature type="helix" evidence="31">
    <location>
        <begin position="603"/>
        <end position="611"/>
    </location>
</feature>
<feature type="helix" evidence="31">
    <location>
        <begin position="613"/>
        <end position="616"/>
    </location>
</feature>
<feature type="strand" evidence="31">
    <location>
        <begin position="617"/>
        <end position="619"/>
    </location>
</feature>
<feature type="turn" evidence="32">
    <location>
        <begin position="622"/>
        <end position="624"/>
    </location>
</feature>
<feature type="strand" evidence="32">
    <location>
        <begin position="626"/>
        <end position="628"/>
    </location>
</feature>
<feature type="helix" evidence="34">
    <location>
        <begin position="630"/>
        <end position="632"/>
    </location>
</feature>
<feature type="strand" evidence="31">
    <location>
        <begin position="634"/>
        <end position="640"/>
    </location>
</feature>
<feature type="helix" evidence="29">
    <location>
        <begin position="642"/>
        <end position="644"/>
    </location>
</feature>
<feature type="helix" evidence="31">
    <location>
        <begin position="647"/>
        <end position="651"/>
    </location>
</feature>
<feature type="strand" evidence="31">
    <location>
        <begin position="653"/>
        <end position="657"/>
    </location>
</feature>
<feature type="helix" evidence="31">
    <location>
        <begin position="663"/>
        <end position="672"/>
    </location>
</feature>
<feature type="helix" evidence="31">
    <location>
        <begin position="674"/>
        <end position="682"/>
    </location>
</feature>
<feature type="turn" evidence="31">
    <location>
        <begin position="686"/>
        <end position="688"/>
    </location>
</feature>
<feature type="helix" evidence="31">
    <location>
        <begin position="693"/>
        <end position="702"/>
    </location>
</feature>
<feature type="strand" evidence="31">
    <location>
        <begin position="706"/>
        <end position="709"/>
    </location>
</feature>
<feature type="helix" evidence="31">
    <location>
        <begin position="712"/>
        <end position="728"/>
    </location>
</feature>
<feature type="strand" evidence="31">
    <location>
        <begin position="733"/>
        <end position="736"/>
    </location>
</feature>
<feature type="helix" evidence="31">
    <location>
        <begin position="739"/>
        <end position="741"/>
    </location>
</feature>
<feature type="helix" evidence="31">
    <location>
        <begin position="742"/>
        <end position="746"/>
    </location>
</feature>
<feature type="strand" evidence="30">
    <location>
        <begin position="750"/>
        <end position="753"/>
    </location>
</feature>
<feature type="strand" evidence="33">
    <location>
        <begin position="754"/>
        <end position="756"/>
    </location>
</feature>
<feature type="strand" evidence="26">
    <location>
        <begin position="764"/>
        <end position="786"/>
    </location>
</feature>
<feature type="strand" evidence="26">
    <location>
        <begin position="799"/>
        <end position="804"/>
    </location>
</feature>
<feature type="helix" evidence="26">
    <location>
        <begin position="808"/>
        <end position="828"/>
    </location>
</feature>
<feature type="helix" evidence="26">
    <location>
        <begin position="834"/>
        <end position="837"/>
    </location>
</feature>
<feature type="strand" evidence="26">
    <location>
        <begin position="839"/>
        <end position="843"/>
    </location>
</feature>
<feature type="turn" evidence="26">
    <location>
        <begin position="850"/>
        <end position="852"/>
    </location>
</feature>
<feature type="helix" evidence="26">
    <location>
        <begin position="853"/>
        <end position="856"/>
    </location>
</feature>
<feature type="helix" evidence="26">
    <location>
        <begin position="857"/>
        <end position="869"/>
    </location>
</feature>
<feature type="strand" evidence="26">
    <location>
        <begin position="877"/>
        <end position="879"/>
    </location>
</feature>
<feature type="strand" evidence="26">
    <location>
        <begin position="887"/>
        <end position="890"/>
    </location>
</feature>
<feature type="helix" evidence="26">
    <location>
        <begin position="895"/>
        <end position="904"/>
    </location>
</feature>
<feature type="strand" evidence="26">
    <location>
        <begin position="909"/>
        <end position="913"/>
    </location>
</feature>
<feature type="helix" evidence="26">
    <location>
        <begin position="914"/>
        <end position="916"/>
    </location>
</feature>
<feature type="helix" evidence="26">
    <location>
        <begin position="917"/>
        <end position="921"/>
    </location>
</feature>
<feature type="helix" evidence="26">
    <location>
        <begin position="925"/>
        <end position="928"/>
    </location>
</feature>
<feature type="strand" evidence="26">
    <location>
        <begin position="932"/>
        <end position="938"/>
    </location>
</feature>
<feature type="helix" evidence="26">
    <location>
        <begin position="939"/>
        <end position="946"/>
    </location>
</feature>
<feature type="helix" evidence="27">
    <location>
        <begin position="948"/>
        <end position="951"/>
    </location>
</feature>
<feature type="helix" evidence="28">
    <location>
        <begin position="952"/>
        <end position="956"/>
    </location>
</feature>
<reference key="1">
    <citation type="journal article" date="1993" name="Proc. Natl. Acad. Sci. U.S.A.">
        <title>A human mitochondrial ATP-dependent protease that is highly homologous to bacterial Lon protease.</title>
        <authorList>
            <person name="Wang N."/>
            <person name="Gottesman S."/>
            <person name="Willingham M.C."/>
            <person name="Gottesman M.M."/>
            <person name="Maurizi M.R."/>
        </authorList>
    </citation>
    <scope>NUCLEOTIDE SEQUENCE [MRNA] (ISOFORM 1)</scope>
    <scope>FUNCTION</scope>
    <scope>TISSUE SPECIFICITY</scope>
    <source>
        <tissue>Brain</tissue>
    </source>
</reference>
<reference key="2">
    <citation type="journal article" date="2011" name="Nucleic Acids Res.">
        <title>Identification of rare DNA variants in mitochondrial disorders with improved array-based sequencing.</title>
        <authorList>
            <person name="Wang W."/>
            <person name="Shen P."/>
            <person name="Thiyagarajan S."/>
            <person name="Lin S."/>
            <person name="Palm C."/>
            <person name="Horvath R."/>
            <person name="Klopstock T."/>
            <person name="Cutler D."/>
            <person name="Pique L."/>
            <person name="Schrijver I."/>
            <person name="Davis R.W."/>
            <person name="Mindrinos M."/>
            <person name="Speed T.P."/>
            <person name="Scharfe C."/>
        </authorList>
    </citation>
    <scope>NUCLEOTIDE SEQUENCE [GENOMIC DNA]</scope>
    <scope>VARIANT ILE-911</scope>
</reference>
<reference key="3">
    <citation type="submission" date="1998-04" db="EMBL/GenBank/DDBJ databases">
        <title>Chromosomal mapping and genomic organization of the ATP-dependent human LON protease gene.</title>
        <authorList>
            <person name="Huang N.N."/>
            <person name="Maurizi M.R."/>
            <person name="Torres R.R."/>
            <person name="Polymeropoulos M.H."/>
            <person name="Lennon G.G."/>
            <person name="Gottesman M.M."/>
        </authorList>
    </citation>
    <scope>NUCLEOTIDE SEQUENCE [GENOMIC DNA]</scope>
</reference>
<reference key="4">
    <citation type="journal article" date="2004" name="Nat. Genet.">
        <title>Complete sequencing and characterization of 21,243 full-length human cDNAs.</title>
        <authorList>
            <person name="Ota T."/>
            <person name="Suzuki Y."/>
            <person name="Nishikawa T."/>
            <person name="Otsuki T."/>
            <person name="Sugiyama T."/>
            <person name="Irie R."/>
            <person name="Wakamatsu A."/>
            <person name="Hayashi K."/>
            <person name="Sato H."/>
            <person name="Nagai K."/>
            <person name="Kimura K."/>
            <person name="Makita H."/>
            <person name="Sekine M."/>
            <person name="Obayashi M."/>
            <person name="Nishi T."/>
            <person name="Shibahara T."/>
            <person name="Tanaka T."/>
            <person name="Ishii S."/>
            <person name="Yamamoto J."/>
            <person name="Saito K."/>
            <person name="Kawai Y."/>
            <person name="Isono Y."/>
            <person name="Nakamura Y."/>
            <person name="Nagahari K."/>
            <person name="Murakami K."/>
            <person name="Yasuda T."/>
            <person name="Iwayanagi T."/>
            <person name="Wagatsuma M."/>
            <person name="Shiratori A."/>
            <person name="Sudo H."/>
            <person name="Hosoiri T."/>
            <person name="Kaku Y."/>
            <person name="Kodaira H."/>
            <person name="Kondo H."/>
            <person name="Sugawara M."/>
            <person name="Takahashi M."/>
            <person name="Kanda K."/>
            <person name="Yokoi T."/>
            <person name="Furuya T."/>
            <person name="Kikkawa E."/>
            <person name="Omura Y."/>
            <person name="Abe K."/>
            <person name="Kamihara K."/>
            <person name="Katsuta N."/>
            <person name="Sato K."/>
            <person name="Tanikawa M."/>
            <person name="Yamazaki M."/>
            <person name="Ninomiya K."/>
            <person name="Ishibashi T."/>
            <person name="Yamashita H."/>
            <person name="Murakawa K."/>
            <person name="Fujimori K."/>
            <person name="Tanai H."/>
            <person name="Kimata M."/>
            <person name="Watanabe M."/>
            <person name="Hiraoka S."/>
            <person name="Chiba Y."/>
            <person name="Ishida S."/>
            <person name="Ono Y."/>
            <person name="Takiguchi S."/>
            <person name="Watanabe S."/>
            <person name="Yosida M."/>
            <person name="Hotuta T."/>
            <person name="Kusano J."/>
            <person name="Kanehori K."/>
            <person name="Takahashi-Fujii A."/>
            <person name="Hara H."/>
            <person name="Tanase T.-O."/>
            <person name="Nomura Y."/>
            <person name="Togiya S."/>
            <person name="Komai F."/>
            <person name="Hara R."/>
            <person name="Takeuchi K."/>
            <person name="Arita M."/>
            <person name="Imose N."/>
            <person name="Musashino K."/>
            <person name="Yuuki H."/>
            <person name="Oshima A."/>
            <person name="Sasaki N."/>
            <person name="Aotsuka S."/>
            <person name="Yoshikawa Y."/>
            <person name="Matsunawa H."/>
            <person name="Ichihara T."/>
            <person name="Shiohata N."/>
            <person name="Sano S."/>
            <person name="Moriya S."/>
            <person name="Momiyama H."/>
            <person name="Satoh N."/>
            <person name="Takami S."/>
            <person name="Terashima Y."/>
            <person name="Suzuki O."/>
            <person name="Nakagawa S."/>
            <person name="Senoh A."/>
            <person name="Mizoguchi H."/>
            <person name="Goto Y."/>
            <person name="Shimizu F."/>
            <person name="Wakebe H."/>
            <person name="Hishigaki H."/>
            <person name="Watanabe T."/>
            <person name="Sugiyama A."/>
            <person name="Takemoto M."/>
            <person name="Kawakami B."/>
            <person name="Yamazaki M."/>
            <person name="Watanabe K."/>
            <person name="Kumagai A."/>
            <person name="Itakura S."/>
            <person name="Fukuzumi Y."/>
            <person name="Fujimori Y."/>
            <person name="Komiyama M."/>
            <person name="Tashiro H."/>
            <person name="Tanigami A."/>
            <person name="Fujiwara T."/>
            <person name="Ono T."/>
            <person name="Yamada K."/>
            <person name="Fujii Y."/>
            <person name="Ozaki K."/>
            <person name="Hirao M."/>
            <person name="Ohmori Y."/>
            <person name="Kawabata A."/>
            <person name="Hikiji T."/>
            <person name="Kobatake N."/>
            <person name="Inagaki H."/>
            <person name="Ikema Y."/>
            <person name="Okamoto S."/>
            <person name="Okitani R."/>
            <person name="Kawakami T."/>
            <person name="Noguchi S."/>
            <person name="Itoh T."/>
            <person name="Shigeta K."/>
            <person name="Senba T."/>
            <person name="Matsumura K."/>
            <person name="Nakajima Y."/>
            <person name="Mizuno T."/>
            <person name="Morinaga M."/>
            <person name="Sasaki M."/>
            <person name="Togashi T."/>
            <person name="Oyama M."/>
            <person name="Hata H."/>
            <person name="Watanabe M."/>
            <person name="Komatsu T."/>
            <person name="Mizushima-Sugano J."/>
            <person name="Satoh T."/>
            <person name="Shirai Y."/>
            <person name="Takahashi Y."/>
            <person name="Nakagawa K."/>
            <person name="Okumura K."/>
            <person name="Nagase T."/>
            <person name="Nomura N."/>
            <person name="Kikuchi H."/>
            <person name="Masuho Y."/>
            <person name="Yamashita R."/>
            <person name="Nakai K."/>
            <person name="Yada T."/>
            <person name="Nakamura Y."/>
            <person name="Ohara O."/>
            <person name="Isogai T."/>
            <person name="Sugano S."/>
        </authorList>
    </citation>
    <scope>NUCLEOTIDE SEQUENCE [LARGE SCALE MRNA] (ISOFORMS 2 AND 3)</scope>
    <source>
        <tissue>Brain</tissue>
    </source>
</reference>
<reference key="5">
    <citation type="journal article" date="2004" name="Nature">
        <title>The DNA sequence and biology of human chromosome 19.</title>
        <authorList>
            <person name="Grimwood J."/>
            <person name="Gordon L.A."/>
            <person name="Olsen A.S."/>
            <person name="Terry A."/>
            <person name="Schmutz J."/>
            <person name="Lamerdin J.E."/>
            <person name="Hellsten U."/>
            <person name="Goodstein D."/>
            <person name="Couronne O."/>
            <person name="Tran-Gyamfi M."/>
            <person name="Aerts A."/>
            <person name="Altherr M."/>
            <person name="Ashworth L."/>
            <person name="Bajorek E."/>
            <person name="Black S."/>
            <person name="Branscomb E."/>
            <person name="Caenepeel S."/>
            <person name="Carrano A.V."/>
            <person name="Caoile C."/>
            <person name="Chan Y.M."/>
            <person name="Christensen M."/>
            <person name="Cleland C.A."/>
            <person name="Copeland A."/>
            <person name="Dalin E."/>
            <person name="Dehal P."/>
            <person name="Denys M."/>
            <person name="Detter J.C."/>
            <person name="Escobar J."/>
            <person name="Flowers D."/>
            <person name="Fotopulos D."/>
            <person name="Garcia C."/>
            <person name="Georgescu A.M."/>
            <person name="Glavina T."/>
            <person name="Gomez M."/>
            <person name="Gonzales E."/>
            <person name="Groza M."/>
            <person name="Hammon N."/>
            <person name="Hawkins T."/>
            <person name="Haydu L."/>
            <person name="Ho I."/>
            <person name="Huang W."/>
            <person name="Israni S."/>
            <person name="Jett J."/>
            <person name="Kadner K."/>
            <person name="Kimball H."/>
            <person name="Kobayashi A."/>
            <person name="Larionov V."/>
            <person name="Leem S.-H."/>
            <person name="Lopez F."/>
            <person name="Lou Y."/>
            <person name="Lowry S."/>
            <person name="Malfatti S."/>
            <person name="Martinez D."/>
            <person name="McCready P.M."/>
            <person name="Medina C."/>
            <person name="Morgan J."/>
            <person name="Nelson K."/>
            <person name="Nolan M."/>
            <person name="Ovcharenko I."/>
            <person name="Pitluck S."/>
            <person name="Pollard M."/>
            <person name="Popkie A.P."/>
            <person name="Predki P."/>
            <person name="Quan G."/>
            <person name="Ramirez L."/>
            <person name="Rash S."/>
            <person name="Retterer J."/>
            <person name="Rodriguez A."/>
            <person name="Rogers S."/>
            <person name="Salamov A."/>
            <person name="Salazar A."/>
            <person name="She X."/>
            <person name="Smith D."/>
            <person name="Slezak T."/>
            <person name="Solovyev V."/>
            <person name="Thayer N."/>
            <person name="Tice H."/>
            <person name="Tsai M."/>
            <person name="Ustaszewska A."/>
            <person name="Vo N."/>
            <person name="Wagner M."/>
            <person name="Wheeler J."/>
            <person name="Wu K."/>
            <person name="Xie G."/>
            <person name="Yang J."/>
            <person name="Dubchak I."/>
            <person name="Furey T.S."/>
            <person name="DeJong P."/>
            <person name="Dickson M."/>
            <person name="Gordon D."/>
            <person name="Eichler E.E."/>
            <person name="Pennacchio L.A."/>
            <person name="Richardson P."/>
            <person name="Stubbs L."/>
            <person name="Rokhsar D.S."/>
            <person name="Myers R.M."/>
            <person name="Rubin E.M."/>
            <person name="Lucas S.M."/>
        </authorList>
    </citation>
    <scope>NUCLEOTIDE SEQUENCE [LARGE SCALE GENOMIC DNA]</scope>
</reference>
<reference key="6">
    <citation type="submission" date="2005-09" db="EMBL/GenBank/DDBJ databases">
        <authorList>
            <person name="Mural R.J."/>
            <person name="Istrail S."/>
            <person name="Sutton G.G."/>
            <person name="Florea L."/>
            <person name="Halpern A.L."/>
            <person name="Mobarry C.M."/>
            <person name="Lippert R."/>
            <person name="Walenz B."/>
            <person name="Shatkay H."/>
            <person name="Dew I."/>
            <person name="Miller J.R."/>
            <person name="Flanigan M.J."/>
            <person name="Edwards N.J."/>
            <person name="Bolanos R."/>
            <person name="Fasulo D."/>
            <person name="Halldorsson B.V."/>
            <person name="Hannenhalli S."/>
            <person name="Turner R."/>
            <person name="Yooseph S."/>
            <person name="Lu F."/>
            <person name="Nusskern D.R."/>
            <person name="Shue B.C."/>
            <person name="Zheng X.H."/>
            <person name="Zhong F."/>
            <person name="Delcher A.L."/>
            <person name="Huson D.H."/>
            <person name="Kravitz S.A."/>
            <person name="Mouchard L."/>
            <person name="Reinert K."/>
            <person name="Remington K.A."/>
            <person name="Clark A.G."/>
            <person name="Waterman M.S."/>
            <person name="Eichler E.E."/>
            <person name="Adams M.D."/>
            <person name="Hunkapiller M.W."/>
            <person name="Myers E.W."/>
            <person name="Venter J.C."/>
        </authorList>
    </citation>
    <scope>NUCLEOTIDE SEQUENCE [LARGE SCALE GENOMIC DNA]</scope>
</reference>
<reference key="7">
    <citation type="journal article" date="2004" name="Genome Res.">
        <title>The status, quality, and expansion of the NIH full-length cDNA project: the Mammalian Gene Collection (MGC).</title>
        <authorList>
            <consortium name="The MGC Project Team"/>
        </authorList>
    </citation>
    <scope>NUCLEOTIDE SEQUENCE [LARGE SCALE MRNA] (ISOFORM 1)</scope>
    <source>
        <tissue>Eye</tissue>
    </source>
</reference>
<reference key="8">
    <citation type="journal article" date="1994" name="FEBS Lett.">
        <title>Cloning and sequence analysis of cDNA for a human homolog of eubacterial ATP-dependent Lon proteases.</title>
        <authorList>
            <person name="Amerik A.Y."/>
            <person name="Petukhova G.V."/>
            <person name="Grigorenko V.G."/>
            <person name="Lykov I.P."/>
            <person name="Yarovoi S.V."/>
            <person name="Lipkin V.M."/>
            <person name="Gorbalenya A.E."/>
        </authorList>
    </citation>
    <scope>NUCLEOTIDE SEQUENCE [MRNA] OF 3-959 (ISOFORM 1)</scope>
    <scope>VARIANT ILE-911</scope>
    <source>
        <tissue>Brain</tissue>
    </source>
</reference>
<reference key="9">
    <citation type="journal article" date="1994" name="J. Biol. Chem.">
        <title>Synthesis, processing, and localization of human Lon protease.</title>
        <authorList>
            <person name="Wang N."/>
            <person name="Maurizi M.R."/>
            <person name="Emmert-Buck L."/>
            <person name="Gottesman M.M."/>
        </authorList>
    </citation>
    <scope>SUBCELLULAR LOCATION</scope>
</reference>
<reference key="10">
    <citation type="journal article" date="1998" name="Biochemistry">
        <title>The human LON protease binds to mitochondrial promoters in a single-stranded, site-specific, strand-specific manner.</title>
        <authorList>
            <person name="Fu G.K."/>
            <person name="Markovitz D.M."/>
        </authorList>
    </citation>
    <scope>DNA-BINDING</scope>
</reference>
<reference key="11">
    <citation type="journal article" date="2002" name="Nat. Cell Biol.">
        <title>Lon protease preferentially degrades oxidized mitochondrial aconitase by an ATP-stimulated mechanism.</title>
        <authorList>
            <person name="Bota D.A."/>
            <person name="Davies K.J."/>
        </authorList>
    </citation>
    <scope>FUNCTION</scope>
</reference>
<reference key="12">
    <citation type="journal article" date="2004" name="J. Biol. Chem.">
        <title>DNA and RNA binding by the mitochondrial lon protease is regulated by nucleotide and protein substrate.</title>
        <authorList>
            <person name="Liu T."/>
            <person name="Lu B."/>
            <person name="Lee I."/>
            <person name="Ondrovicova G."/>
            <person name="Kutejova E."/>
            <person name="Suzuki C.K."/>
        </authorList>
    </citation>
    <scope>DNA-BINDING</scope>
    <scope>FUNCTION</scope>
    <scope>CATALYTIC ACTIVITY</scope>
    <scope>MUTAGENESIS OF SER-855</scope>
    <scope>SUBUNIT</scope>
    <scope>INTERACTION WITH TWNK AND POLG</scope>
</reference>
<reference key="13">
    <citation type="journal article" date="2005" name="J. Biol. Chem.">
        <title>Cleavage site selection within a folded substrate by the ATP-dependent lon protease.</title>
        <authorList>
            <person name="Ondrovicova G."/>
            <person name="Liu T."/>
            <person name="Singh K."/>
            <person name="Tian B."/>
            <person name="Li H."/>
            <person name="Gakh O."/>
            <person name="Perecko D."/>
            <person name="Janata J."/>
            <person name="Granot Z."/>
            <person name="Orly J."/>
            <person name="Kutejova E."/>
            <person name="Suzuki C.K."/>
        </authorList>
    </citation>
    <scope>FUNCTION</scope>
</reference>
<reference key="14">
    <citation type="journal article" date="2007" name="J. Biol. Chem.">
        <title>Roles for the human ATP-dependent Lon protease in mitochondrial DNA maintenance.</title>
        <authorList>
            <person name="Lu B."/>
            <person name="Yadav S."/>
            <person name="Shah P.G."/>
            <person name="Liu T."/>
            <person name="Tian B."/>
            <person name="Pukszta S."/>
            <person name="Villaluna N."/>
            <person name="Kutejova E."/>
            <person name="Newlon C.S."/>
            <person name="Santos J.H."/>
            <person name="Suzuki C.K."/>
        </authorList>
    </citation>
    <scope>FUNCTION</scope>
    <scope>CATALYTIC ACTIVITY</scope>
    <scope>DNA-BINDING</scope>
</reference>
<reference key="15">
    <citation type="journal article" date="2007" name="Mol. Endocrinol.">
        <title>Turnover of mitochondrial steroidogenic acute regulatory (StAR) protein by Lon protease: the unexpected effect of proteasome inhibitors.</title>
        <authorList>
            <person name="Granot Z."/>
            <person name="Kobiler O."/>
            <person name="Melamed-Book N."/>
            <person name="Eimerl S."/>
            <person name="Bahat A."/>
            <person name="Lu B."/>
            <person name="Braun S."/>
            <person name="Maurizi M.R."/>
            <person name="Suzuki C.K."/>
            <person name="Oppenheim A.B."/>
            <person name="Orly J."/>
        </authorList>
    </citation>
    <scope>FUNCTION</scope>
</reference>
<reference key="16">
    <citation type="journal article" date="2011" name="BMC Syst. Biol.">
        <title>Initial characterization of the human central proteome.</title>
        <authorList>
            <person name="Burkard T.R."/>
            <person name="Planyavsky M."/>
            <person name="Kaupe I."/>
            <person name="Breitwieser F.P."/>
            <person name="Buerckstuemmer T."/>
            <person name="Bennett K.L."/>
            <person name="Superti-Furga G."/>
            <person name="Colinge J."/>
        </authorList>
    </citation>
    <scope>IDENTIFICATION BY MASS SPECTROMETRY [LARGE SCALE ANALYSIS]</scope>
</reference>
<reference key="17">
    <citation type="journal article" date="2013" name="J. Proteome Res.">
        <title>Toward a comprehensive characterization of a human cancer cell phosphoproteome.</title>
        <authorList>
            <person name="Zhou H."/>
            <person name="Di Palma S."/>
            <person name="Preisinger C."/>
            <person name="Peng M."/>
            <person name="Polat A.N."/>
            <person name="Heck A.J."/>
            <person name="Mohammed S."/>
        </authorList>
    </citation>
    <scope>IDENTIFICATION BY MASS SPECTROMETRY [LARGE SCALE ANALYSIS]</scope>
    <source>
        <tissue>Erythroleukemia</tissue>
    </source>
</reference>
<reference key="18">
    <citation type="journal article" date="2014" name="FEBS J.">
        <title>Mutations to a glycine loop in the catalytic site of human Lon changes its protease, peptidase and ATPase activities.</title>
        <authorList>
            <person name="Ambro L."/>
            <person name="Pevala V."/>
            <person name="Ondrovicova G."/>
            <person name="Bellova J."/>
            <person name="Kunova N."/>
            <person name="Kutejova E."/>
            <person name="Bauer J."/>
        </authorList>
    </citation>
    <scope>MUTAGENESIS OF LYS-529; TRP-770; SER-855; THR-880; GLY-893 AND GLY-894</scope>
</reference>
<reference key="19">
    <citation type="journal article" date="2014" name="Folia Biol. (Praha)">
        <title>Three-dimensional reconstruction of the S885A mutant of human mitochondrial Lon protease.</title>
        <authorList>
            <person name="Kereiche S."/>
            <person name="Kovacik L."/>
            <person name="Pevala V."/>
            <person name="Ambro L."/>
            <person name="Bellova J."/>
            <person name="Kutejova E."/>
            <person name="Raska I."/>
        </authorList>
    </citation>
    <scope>SUBUNIT</scope>
</reference>
<reference key="20">
    <citation type="journal article" date="2014" name="J. Proteomics">
        <title>An enzyme assisted RP-RPLC approach for in-depth analysis of human liver phosphoproteome.</title>
        <authorList>
            <person name="Bian Y."/>
            <person name="Song C."/>
            <person name="Cheng K."/>
            <person name="Dong M."/>
            <person name="Wang F."/>
            <person name="Huang J."/>
            <person name="Sun D."/>
            <person name="Wang L."/>
            <person name="Ye M."/>
            <person name="Zou H."/>
        </authorList>
    </citation>
    <scope>IDENTIFICATION BY MASS SPECTROMETRY [LARGE SCALE ANALYSIS]</scope>
    <source>
        <tissue>Liver</tissue>
    </source>
</reference>
<reference key="21">
    <citation type="journal article" date="2015" name="Am. J. Hum. Genet.">
        <title>CODAS syndrome is associated with mutations of LONP1, encoding mitochondrial AAA+ Lon protease.</title>
        <authorList>
            <person name="Strauss K.A."/>
            <person name="Jinks R.N."/>
            <person name="Puffenberger E.G."/>
            <person name="Venkatesh S."/>
            <person name="Singh K."/>
            <person name="Cheng I."/>
            <person name="Mikita N."/>
            <person name="Thilagavathi J."/>
            <person name="Lee J."/>
            <person name="Sarafianos S."/>
            <person name="Benkert A."/>
            <person name="Koehler A."/>
            <person name="Zhu A."/>
            <person name="Trovillion V."/>
            <person name="McGlincy M."/>
            <person name="Morlet T."/>
            <person name="Deardorff M."/>
            <person name="Innes A.M."/>
            <person name="Prasad C."/>
            <person name="Chudley A.E."/>
            <person name="Lee I.N."/>
            <person name="Suzuki C.K."/>
        </authorList>
    </citation>
    <scope>INVOLVEMENT IN CODASS</scope>
    <scope>VARIANTS CODASS TYR-631; SER-676; GLY-721 AND VAL-724</scope>
</reference>
<reference key="22">
    <citation type="journal article" date="2015" name="Am. J. Med. Genet. A">
        <title>Mutations in LONP1, a mitochondrial matrix protease, cause CODAS syndrome.</title>
        <authorList>
            <person name="Dikoglu E."/>
            <person name="Alfaiz A."/>
            <person name="Gorna M."/>
            <person name="Bertola D."/>
            <person name="Chae J.H."/>
            <person name="Cho T.J."/>
            <person name="Derbent M."/>
            <person name="Alanay Y."/>
            <person name="Guran T."/>
            <person name="Kim O.H."/>
            <person name="Llerenar J.C. Jr."/>
            <person name="Yamamoto G."/>
            <person name="Superti-Furga G."/>
            <person name="Reymond A."/>
            <person name="Xenarios I."/>
            <person name="Stevenson B."/>
            <person name="Campos-Xavier B."/>
            <person name="Bonafe L."/>
            <person name="Superti-Furga A."/>
            <person name="Unger S."/>
        </authorList>
    </citation>
    <scope>INVOLVEMENT IN CODASS</scope>
    <scope>VARIANTS CODASS ALA-476; VAL-670; CYS-672; HIS-679; SER-749; GLU-767 AND ILE-927 DEL</scope>
</reference>
<reference key="23">
    <citation type="journal article" date="2015" name="Proteomics">
        <title>N-terminome analysis of the human mitochondrial proteome.</title>
        <authorList>
            <person name="Vaca Jacome A.S."/>
            <person name="Rabilloud T."/>
            <person name="Schaeffer-Reiss C."/>
            <person name="Rompais M."/>
            <person name="Ayoub D."/>
            <person name="Lane L."/>
            <person name="Bairoch A."/>
            <person name="Van Dorsselaer A."/>
            <person name="Carapito C."/>
        </authorList>
    </citation>
    <scope>CLEAVAGE OF TRANSIT PEPTIDE [LARGE SCALE ANALYSIS] AFTER GLY-67</scope>
    <scope>IDENTIFICATION BY MASS SPECTROMETRY [LARGE SCALE ANALYSIS]</scope>
</reference>
<reference key="24">
    <citation type="journal article" date="2017" name="Sci. Rep.">
        <title>The role of Lon-mediated proteolysis in the dynamics of mitochondrial nucleic acid-protein complexes.</title>
        <authorList>
            <person name="Kunova N."/>
            <person name="Ondrovicova G."/>
            <person name="Bauer J.A."/>
            <person name="Bellova J."/>
            <person name="Ambro L."/>
            <person name="Martinakova L."/>
            <person name="Kotrasova V."/>
            <person name="Kutejova E."/>
            <person name="Pevala V."/>
        </authorList>
    </citation>
    <scope>FUNCTION</scope>
</reference>
<reference key="25">
    <citation type="journal article" date="2023" name="Mol. Cell">
        <title>A mitochondrial iron-responsive pathway regulated by DELE1.</title>
        <authorList>
            <person name="Sekine Y."/>
            <person name="Houston R."/>
            <person name="Eckl E.M."/>
            <person name="Fessler E."/>
            <person name="Narendra D.P."/>
            <person name="Jae L.T."/>
            <person name="Sekine S."/>
        </authorList>
    </citation>
    <scope>FUNCTION</scope>
</reference>
<reference key="26">
    <citation type="journal article" date="2010" name="Protein Sci.">
        <title>Structure of the catalytic domain of the human mitochondrial Lon protease: proposed relation of oligomer formation and activity.</title>
        <authorList>
            <person name="Garcia-Nafria J."/>
            <person name="Ondrovicova G."/>
            <person name="Blagova E."/>
            <person name="Levdikov V.M."/>
            <person name="Bauer J.A."/>
            <person name="Suzuki C.K."/>
            <person name="Kutejova E."/>
            <person name="Wilkinson A.J."/>
            <person name="Wilson K.S."/>
        </authorList>
    </citation>
    <scope>X-RAY CRYSTALLOGRAPHY (2.0 ANGSTROMS) OF 753-959</scope>
    <scope>SUBUNIT</scope>
</reference>
<reference key="27">
    <citation type="journal article" date="2016" name="Sci. Rep.">
        <title>The N-terminal domain plays a crucial role in the structure of a full-length human mitochondrial Lon protease.</title>
        <authorList>
            <person name="Kereiche S."/>
            <person name="Kovacik L."/>
            <person name="Bednar J."/>
            <person name="Pevala V."/>
            <person name="Kunova N."/>
            <person name="Ondrovicova G."/>
            <person name="Bauer J."/>
            <person name="Ambro L."/>
            <person name="Bellova J."/>
            <person name="Kutejova E."/>
            <person name="Raska I."/>
        </authorList>
    </citation>
    <scope>STRUCTURE BY ELECTRON MICROSCOPY (15 ANGSTROMS) OF MUTANT ALA-855</scope>
    <scope>SUBUNIT</scope>
    <scope>DOMAIN</scope>
</reference>
<keyword id="KW-0002">3D-structure</keyword>
<keyword id="KW-0025">Alternative splicing</keyword>
<keyword id="KW-0067">ATP-binding</keyword>
<keyword id="KW-0898">Cataract</keyword>
<keyword id="KW-0209">Deafness</keyword>
<keyword id="KW-0225">Disease variant</keyword>
<keyword id="KW-0238">DNA-binding</keyword>
<keyword id="KW-0242">Dwarfism</keyword>
<keyword id="KW-0378">Hydrolase</keyword>
<keyword id="KW-0496">Mitochondrion</keyword>
<keyword id="KW-0547">Nucleotide-binding</keyword>
<keyword id="KW-0645">Protease</keyword>
<keyword id="KW-1267">Proteomics identification</keyword>
<keyword id="KW-1185">Reference proteome</keyword>
<keyword id="KW-0720">Serine protease</keyword>
<keyword id="KW-0809">Transit peptide</keyword>
<accession>P36776</accession>
<accession>B3KPH8</accession>
<accession>D6W635</accession>
<accession>E5KMH8</accession>
<accession>F5GZ27</accession>
<accession>P36777</accession>
<accession>Q8N8K8</accession>
<accession>Q9UQ95</accession>
<comment type="function">
    <text evidence="1 5 6 7 8 9 17 18 21">ATP-dependent serine protease that mediates the selective degradation of misfolded, unassembled or oxidatively damaged polypeptides as well as certain short-lived regulatory proteins in the mitochondrial matrix (PubMed:12198491, PubMed:15870080, PubMed:17579211, PubMed:37327776, PubMed:8248235). Endogenous substrates include mitochondrial steroidogenic acute regulatory (StAR) protein, DELE1, helicase Twinkle (TWNK) and the large ribosomal subunit protein MRPL32/bL32m (PubMed:17579211, PubMed:28377575, PubMed:37327776). MRPL32/bL32m is protected from degradation by LONP1 when it is bound to a nucleic acid (RNA), but TWNK is not (PubMed:17579211, PubMed:28377575). May also have a chaperone function in the assembly of inner membrane protein complexes (By similarity). Participates in the regulation of mitochondrial gene expression and in the maintenance of the integrity of the mitochondrial genome (PubMed:17420247). Binds to mitochondrial promoters and RNA in a single-stranded, site-specific, and strand-specific manner (PubMed:17420247). May regulate mitochondrial DNA replication and/or gene expression using site-specific, single-stranded DNA binding to target the degradation of regulatory proteins binding to adjacent sites in mitochondrial promoters (PubMed:14739292, PubMed:17420247).</text>
</comment>
<comment type="catalytic activity">
    <reaction evidence="1 6 8">
        <text>Hydrolysis of proteins in presence of ATP.</text>
        <dbReference type="EC" id="3.4.21.53"/>
    </reaction>
</comment>
<comment type="activity regulation">
    <text evidence="12">Peptidase activity is subject to substrate inhibition by ATP.</text>
</comment>
<comment type="subunit">
    <text evidence="1 6 10 13 16">Homohexamer (PubMed:14739292, PubMed:20222013, PubMed:25369343). Organized in a ring with a central cavity (PubMed:20222013, PubMed:25369343). The ATP-binding and proteolytic domains (AP-domain) form a hexameric chamber, while the N-terminal domain is arranged as a trimer of dimers (PubMed:27632940). DNA and RNA binding is stimulated by substrate and inhibited by ATP binding. Interacts with TWNK and mitochondrial DNA polymerase subunit POLG (PubMed:14739292).</text>
</comment>
<comment type="interaction">
    <interactant intactId="EBI-357448">
        <id>P36776</id>
    </interactant>
    <interactant intactId="EBI-5260183">
        <id>P02666</id>
        <label>CSN2</label>
    </interactant>
    <organismsDiffer>true</organismsDiffer>
    <experiments>6</experiments>
</comment>
<comment type="interaction">
    <interactant intactId="EBI-25473602">
        <id>P36776-1</id>
    </interactant>
    <interactant intactId="EBI-25473602">
        <id>P36776-1</id>
        <label>LONP1</label>
    </interactant>
    <organismsDiffer>false</organismsDiffer>
    <experiments>3</experiments>
</comment>
<comment type="subcellular location">
    <subcellularLocation>
        <location evidence="1 19">Mitochondrion matrix</location>
    </subcellularLocation>
</comment>
<comment type="alternative products">
    <event type="alternative splicing"/>
    <isoform>
        <id>P36776-1</id>
        <name>1</name>
        <sequence type="displayed"/>
    </isoform>
    <isoform>
        <id>P36776-2</id>
        <name>2</name>
        <sequence type="described" ref="VSP_054617"/>
    </isoform>
    <isoform>
        <id>P36776-3</id>
        <name>3</name>
        <sequence type="described" ref="VSP_055310"/>
    </isoform>
</comment>
<comment type="tissue specificity">
    <text evidence="21">Duodenum, heart, lung and liver, but not thymus.</text>
</comment>
<comment type="domain">
    <text evidence="16">The Lon N-terminal domains are crucial for the overall structure of the protein, maintaining it in a conformation allowing its proper functioning.</text>
</comment>
<comment type="domain">
    <text evidence="16">The AP-domain (ATP-binding and proteolytic domains) has a closed-ring conformation in the presence of AMP-PNP and its N-terminal entry gate appears closed. Upon ADP binding, it switches to a lock-washer conformation and its N-terminal gate opens.</text>
</comment>
<comment type="domain">
    <text evidence="24">The proteolytic site is connected to the ATP binding site through the GG loop (Gly-893 and Gly-894) and the loop containing Trp-770. Binding of a protein substrate such as beta-casein appears to trigger movement of both these loops as part of the conformational changes which lead to enhanced ATPase and peptidase activities.</text>
</comment>
<comment type="disease" evidence="14 15">
    <disease id="DI-04347">
        <name>CODAS syndrome</name>
        <acronym>CODASS</acronym>
        <description>A rare syndrome characterized by the combination of cerebral, ocular, dental, auricular, and skeletal features. These include developmental delay, craniofacial anomalies, cataracts, ptosis, median nasal groove, delayed tooth eruption, hearing loss, short stature, delayed epiphyseal ossification, metaphyseal hip dysplasia, and vertebral coronal clefts.</description>
        <dbReference type="MIM" id="600373"/>
    </disease>
    <text>The disease is caused by variants affecting the gene represented in this entry.</text>
</comment>
<comment type="similarity">
    <text evidence="1">Belongs to the peptidase S16 family.</text>
</comment>
<comment type="sequence caution" evidence="23">
    <conflict type="erroneous initiation">
        <sequence resource="EMBL-CDS" id="CAA52291"/>
    </conflict>
    <text>Truncated N-terminus.</text>
</comment>
<gene>
    <name evidence="1" type="primary">LONP1</name>
    <name type="synonym">PRSS15</name>
</gene>
<protein>
    <recommendedName>
        <fullName evidence="1">Lon protease homolog, mitochondrial</fullName>
        <ecNumber evidence="1">3.4.21.53</ecNumber>
    </recommendedName>
    <alternativeName>
        <fullName>LONHs</fullName>
    </alternativeName>
    <alternativeName>
        <fullName evidence="1">Lon protease-like protein</fullName>
        <shortName evidence="1">LONP</shortName>
    </alternativeName>
    <alternativeName>
        <fullName evidence="1">Mitochondrial ATP-dependent protease Lon</fullName>
    </alternativeName>
    <alternativeName>
        <fullName evidence="1">Serine protease 15</fullName>
    </alternativeName>
</protein>
<dbReference type="EC" id="3.4.21.53" evidence="1"/>
<dbReference type="EMBL" id="U02389">
    <property type="protein sequence ID" value="AAA61616.1"/>
    <property type="molecule type" value="mRNA"/>
</dbReference>
<dbReference type="EMBL" id="HQ204946">
    <property type="protein sequence ID" value="ADP90374.1"/>
    <property type="molecule type" value="Genomic_DNA"/>
</dbReference>
<dbReference type="EMBL" id="HQ204947">
    <property type="protein sequence ID" value="ADP90375.1"/>
    <property type="molecule type" value="Genomic_DNA"/>
</dbReference>
<dbReference type="EMBL" id="HQ204948">
    <property type="protein sequence ID" value="ADP90376.1"/>
    <property type="molecule type" value="Genomic_DNA"/>
</dbReference>
<dbReference type="EMBL" id="HQ204949">
    <property type="protein sequence ID" value="ADP90377.1"/>
    <property type="molecule type" value="Genomic_DNA"/>
</dbReference>
<dbReference type="EMBL" id="HQ204950">
    <property type="protein sequence ID" value="ADP90378.1"/>
    <property type="molecule type" value="Genomic_DNA"/>
</dbReference>
<dbReference type="EMBL" id="HQ204951">
    <property type="protein sequence ID" value="ADP90379.1"/>
    <property type="molecule type" value="Genomic_DNA"/>
</dbReference>
<dbReference type="EMBL" id="HQ204952">
    <property type="protein sequence ID" value="ADP90380.1"/>
    <property type="molecule type" value="Genomic_DNA"/>
</dbReference>
<dbReference type="EMBL" id="HQ204953">
    <property type="protein sequence ID" value="ADP90381.1"/>
    <property type="molecule type" value="Genomic_DNA"/>
</dbReference>
<dbReference type="EMBL" id="HQ204954">
    <property type="protein sequence ID" value="ADP90382.1"/>
    <property type="molecule type" value="Genomic_DNA"/>
</dbReference>
<dbReference type="EMBL" id="HQ204955">
    <property type="protein sequence ID" value="ADP90383.1"/>
    <property type="molecule type" value="Genomic_DNA"/>
</dbReference>
<dbReference type="EMBL" id="HQ204956">
    <property type="protein sequence ID" value="ADP90384.1"/>
    <property type="molecule type" value="Genomic_DNA"/>
</dbReference>
<dbReference type="EMBL" id="HQ204957">
    <property type="protein sequence ID" value="ADP90385.1"/>
    <property type="molecule type" value="Genomic_DNA"/>
</dbReference>
<dbReference type="EMBL" id="HQ204958">
    <property type="protein sequence ID" value="ADP90386.1"/>
    <property type="molecule type" value="Genomic_DNA"/>
</dbReference>
<dbReference type="EMBL" id="HQ204959">
    <property type="protein sequence ID" value="ADP90387.1"/>
    <property type="molecule type" value="Genomic_DNA"/>
</dbReference>
<dbReference type="EMBL" id="HQ204960">
    <property type="protein sequence ID" value="ADP90388.1"/>
    <property type="molecule type" value="Genomic_DNA"/>
</dbReference>
<dbReference type="EMBL" id="HQ204961">
    <property type="protein sequence ID" value="ADP90389.1"/>
    <property type="molecule type" value="Genomic_DNA"/>
</dbReference>
<dbReference type="EMBL" id="HQ204962">
    <property type="protein sequence ID" value="ADP90390.1"/>
    <property type="molecule type" value="Genomic_DNA"/>
</dbReference>
<dbReference type="EMBL" id="HQ204963">
    <property type="protein sequence ID" value="ADP90391.1"/>
    <property type="molecule type" value="Genomic_DNA"/>
</dbReference>
<dbReference type="EMBL" id="HQ204964">
    <property type="protein sequence ID" value="ADP90392.1"/>
    <property type="molecule type" value="Genomic_DNA"/>
</dbReference>
<dbReference type="EMBL" id="HQ204965">
    <property type="protein sequence ID" value="ADP90393.1"/>
    <property type="molecule type" value="Genomic_DNA"/>
</dbReference>
<dbReference type="EMBL" id="HQ204966">
    <property type="protein sequence ID" value="ADP90394.1"/>
    <property type="molecule type" value="Genomic_DNA"/>
</dbReference>
<dbReference type="EMBL" id="HQ204968">
    <property type="protein sequence ID" value="ADP90396.1"/>
    <property type="molecule type" value="Genomic_DNA"/>
</dbReference>
<dbReference type="EMBL" id="HQ204969">
    <property type="protein sequence ID" value="ADP90397.1"/>
    <property type="molecule type" value="Genomic_DNA"/>
</dbReference>
<dbReference type="EMBL" id="HQ204970">
    <property type="protein sequence ID" value="ADP90398.1"/>
    <property type="molecule type" value="Genomic_DNA"/>
</dbReference>
<dbReference type="EMBL" id="HQ204971">
    <property type="protein sequence ID" value="ADP90399.1"/>
    <property type="molecule type" value="Genomic_DNA"/>
</dbReference>
<dbReference type="EMBL" id="HQ204972">
    <property type="protein sequence ID" value="ADP90400.1"/>
    <property type="molecule type" value="Genomic_DNA"/>
</dbReference>
<dbReference type="EMBL" id="HQ204973">
    <property type="protein sequence ID" value="ADP90401.1"/>
    <property type="molecule type" value="Genomic_DNA"/>
</dbReference>
<dbReference type="EMBL" id="HQ204974">
    <property type="protein sequence ID" value="ADP90402.1"/>
    <property type="molecule type" value="Genomic_DNA"/>
</dbReference>
<dbReference type="EMBL" id="HQ204975">
    <property type="protein sequence ID" value="ADP90403.1"/>
    <property type="molecule type" value="Genomic_DNA"/>
</dbReference>
<dbReference type="EMBL" id="HQ204976">
    <property type="protein sequence ID" value="ADP90404.1"/>
    <property type="molecule type" value="Genomic_DNA"/>
</dbReference>
<dbReference type="EMBL" id="HQ204977">
    <property type="protein sequence ID" value="ADP90405.1"/>
    <property type="molecule type" value="Genomic_DNA"/>
</dbReference>
<dbReference type="EMBL" id="HQ204978">
    <property type="protein sequence ID" value="ADP90406.1"/>
    <property type="molecule type" value="Genomic_DNA"/>
</dbReference>
<dbReference type="EMBL" id="HQ204979">
    <property type="protein sequence ID" value="ADP90407.1"/>
    <property type="molecule type" value="Genomic_DNA"/>
</dbReference>
<dbReference type="EMBL" id="HQ204980">
    <property type="protein sequence ID" value="ADP90408.1"/>
    <property type="molecule type" value="Genomic_DNA"/>
</dbReference>
<dbReference type="EMBL" id="HQ204981">
    <property type="protein sequence ID" value="ADP90409.1"/>
    <property type="molecule type" value="Genomic_DNA"/>
</dbReference>
<dbReference type="EMBL" id="HQ204982">
    <property type="protein sequence ID" value="ADP90410.1"/>
    <property type="molecule type" value="Genomic_DNA"/>
</dbReference>
<dbReference type="EMBL" id="HQ204983">
    <property type="protein sequence ID" value="ADP90411.1"/>
    <property type="molecule type" value="Genomic_DNA"/>
</dbReference>
<dbReference type="EMBL" id="HQ204984">
    <property type="protein sequence ID" value="ADP90412.1"/>
    <property type="molecule type" value="Genomic_DNA"/>
</dbReference>
<dbReference type="EMBL" id="HQ204985">
    <property type="protein sequence ID" value="ADP90413.1"/>
    <property type="molecule type" value="Genomic_DNA"/>
</dbReference>
<dbReference type="EMBL" id="AF059309">
    <property type="protein sequence ID" value="AAD24414.1"/>
    <property type="molecule type" value="Genomic_DNA"/>
</dbReference>
<dbReference type="EMBL" id="AF059296">
    <property type="protein sequence ID" value="AAD24414.1"/>
    <property type="status" value="JOINED"/>
    <property type="molecule type" value="Genomic_DNA"/>
</dbReference>
<dbReference type="EMBL" id="AF059297">
    <property type="protein sequence ID" value="AAD24414.1"/>
    <property type="status" value="JOINED"/>
    <property type="molecule type" value="Genomic_DNA"/>
</dbReference>
<dbReference type="EMBL" id="AF059298">
    <property type="protein sequence ID" value="AAD24414.1"/>
    <property type="status" value="JOINED"/>
    <property type="molecule type" value="Genomic_DNA"/>
</dbReference>
<dbReference type="EMBL" id="AF059299">
    <property type="protein sequence ID" value="AAD24414.1"/>
    <property type="status" value="JOINED"/>
    <property type="molecule type" value="Genomic_DNA"/>
</dbReference>
<dbReference type="EMBL" id="AF059300">
    <property type="protein sequence ID" value="AAD24414.1"/>
    <property type="status" value="JOINED"/>
    <property type="molecule type" value="Genomic_DNA"/>
</dbReference>
<dbReference type="EMBL" id="AF059301">
    <property type="protein sequence ID" value="AAD24414.1"/>
    <property type="status" value="JOINED"/>
    <property type="molecule type" value="Genomic_DNA"/>
</dbReference>
<dbReference type="EMBL" id="AF059302">
    <property type="protein sequence ID" value="AAD24414.1"/>
    <property type="status" value="JOINED"/>
    <property type="molecule type" value="Genomic_DNA"/>
</dbReference>
<dbReference type="EMBL" id="AF059303">
    <property type="protein sequence ID" value="AAD24414.1"/>
    <property type="status" value="JOINED"/>
    <property type="molecule type" value="Genomic_DNA"/>
</dbReference>
<dbReference type="EMBL" id="AF059304">
    <property type="protein sequence ID" value="AAD24414.1"/>
    <property type="status" value="JOINED"/>
    <property type="molecule type" value="Genomic_DNA"/>
</dbReference>
<dbReference type="EMBL" id="AF059305">
    <property type="protein sequence ID" value="AAD24414.1"/>
    <property type="status" value="JOINED"/>
    <property type="molecule type" value="Genomic_DNA"/>
</dbReference>
<dbReference type="EMBL" id="AF059306">
    <property type="protein sequence ID" value="AAD24414.1"/>
    <property type="status" value="JOINED"/>
    <property type="molecule type" value="Genomic_DNA"/>
</dbReference>
<dbReference type="EMBL" id="AF059307">
    <property type="protein sequence ID" value="AAD24414.1"/>
    <property type="status" value="JOINED"/>
    <property type="molecule type" value="Genomic_DNA"/>
</dbReference>
<dbReference type="EMBL" id="AF059308">
    <property type="protein sequence ID" value="AAD24414.1"/>
    <property type="status" value="JOINED"/>
    <property type="molecule type" value="Genomic_DNA"/>
</dbReference>
<dbReference type="EMBL" id="AK056366">
    <property type="protein sequence ID" value="BAG51690.1"/>
    <property type="molecule type" value="mRNA"/>
</dbReference>
<dbReference type="EMBL" id="AK096626">
    <property type="protein sequence ID" value="BAC04829.1"/>
    <property type="molecule type" value="mRNA"/>
</dbReference>
<dbReference type="EMBL" id="AC011499">
    <property type="status" value="NOT_ANNOTATED_CDS"/>
    <property type="molecule type" value="Genomic_DNA"/>
</dbReference>
<dbReference type="EMBL" id="CH471139">
    <property type="protein sequence ID" value="EAW69151.1"/>
    <property type="molecule type" value="Genomic_DNA"/>
</dbReference>
<dbReference type="EMBL" id="CH471139">
    <property type="protein sequence ID" value="EAW69154.1"/>
    <property type="molecule type" value="Genomic_DNA"/>
</dbReference>
<dbReference type="EMBL" id="BC000235">
    <property type="protein sequence ID" value="AAH00235.1"/>
    <property type="molecule type" value="mRNA"/>
</dbReference>
<dbReference type="EMBL" id="X74215">
    <property type="protein sequence ID" value="CAA52291.1"/>
    <property type="status" value="ALT_INIT"/>
    <property type="molecule type" value="mRNA"/>
</dbReference>
<dbReference type="EMBL" id="X76040">
    <property type="protein sequence ID" value="CAA53625.1"/>
    <property type="molecule type" value="mRNA"/>
</dbReference>
<dbReference type="CCDS" id="CCDS12148.1">
    <molecule id="P36776-1"/>
</dbReference>
<dbReference type="CCDS" id="CCDS62507.1">
    <molecule id="P36776-3"/>
</dbReference>
<dbReference type="CCDS" id="CCDS62508.1">
    <molecule id="P36776-2"/>
</dbReference>
<dbReference type="PIR" id="S42366">
    <property type="entry name" value="S42366"/>
</dbReference>
<dbReference type="PIR" id="S57342">
    <property type="entry name" value="S57342"/>
</dbReference>
<dbReference type="RefSeq" id="NP_001263408.1">
    <molecule id="P36776-2"/>
    <property type="nucleotide sequence ID" value="NM_001276479.2"/>
</dbReference>
<dbReference type="RefSeq" id="NP_001263409.1">
    <molecule id="P36776-3"/>
    <property type="nucleotide sequence ID" value="NM_001276480.1"/>
</dbReference>
<dbReference type="RefSeq" id="NP_004784.2">
    <molecule id="P36776-1"/>
    <property type="nucleotide sequence ID" value="NM_004793.3"/>
</dbReference>
<dbReference type="PDB" id="2X36">
    <property type="method" value="X-ray"/>
    <property type="resolution" value="2.00 A"/>
    <property type="chains" value="A/B/C/D/E/F=753-959"/>
</dbReference>
<dbReference type="PDB" id="6WYS">
    <property type="method" value="X-ray"/>
    <property type="resolution" value="2.23 A"/>
    <property type="chains" value="A/B/C=754-959"/>
</dbReference>
<dbReference type="PDB" id="6WZV">
    <property type="method" value="X-ray"/>
    <property type="resolution" value="2.51 A"/>
    <property type="chains" value="A/B/C=754-959"/>
</dbReference>
<dbReference type="PDB" id="6X1M">
    <property type="method" value="X-ray"/>
    <property type="resolution" value="3.51 A"/>
    <property type="chains" value="A/B/C=754-959"/>
</dbReference>
<dbReference type="PDB" id="6X27">
    <property type="method" value="X-ray"/>
    <property type="resolution" value="2.12 A"/>
    <property type="chains" value="A/B/C/D/E/F/G/H/I/J/K/L=754-959"/>
</dbReference>
<dbReference type="PDB" id="7KRZ">
    <property type="method" value="EM"/>
    <property type="resolution" value="3.20 A"/>
    <property type="chains" value="A/B/C/D/E/F=414-947"/>
</dbReference>
<dbReference type="PDB" id="7KSL">
    <property type="method" value="EM"/>
    <property type="resolution" value="3.40 A"/>
    <property type="chains" value="A/B/C/E/F=421-947"/>
</dbReference>
<dbReference type="PDB" id="7KSM">
    <property type="method" value="EM"/>
    <property type="resolution" value="3.20 A"/>
    <property type="chains" value="A/B/C/D/E/F=416-947"/>
</dbReference>
<dbReference type="PDB" id="7NFY">
    <property type="method" value="EM"/>
    <property type="resolution" value="3.90 A"/>
    <property type="chains" value="A/B/C/D/E/F=115-959"/>
</dbReference>
<dbReference type="PDB" id="7NG4">
    <property type="method" value="EM"/>
    <property type="resolution" value="4.40 A"/>
    <property type="chains" value="A/B/C/D/E/F=115-959"/>
</dbReference>
<dbReference type="PDB" id="7NG5">
    <property type="method" value="EM"/>
    <property type="resolution" value="3.80 A"/>
    <property type="chains" value="A/B/C/D/E/F=115-959"/>
</dbReference>
<dbReference type="PDB" id="7NGC">
    <property type="method" value="EM"/>
    <property type="resolution" value="7.50 A"/>
    <property type="chains" value="A/B/C/D/E/F=123-948"/>
</dbReference>
<dbReference type="PDB" id="7NGF">
    <property type="method" value="EM"/>
    <property type="resolution" value="5.60 A"/>
    <property type="chains" value="A/B/C/D/E/F=123-948"/>
</dbReference>
<dbReference type="PDB" id="7NGL">
    <property type="method" value="EM"/>
    <property type="resolution" value="3.80 A"/>
    <property type="chains" value="A/B/C/D/E/F=123-948"/>
</dbReference>
<dbReference type="PDB" id="7NGP">
    <property type="method" value="EM"/>
    <property type="resolution" value="15.00 A"/>
    <property type="chains" value="A/B/C/D/E/F=123-948"/>
</dbReference>
<dbReference type="PDB" id="7NGQ">
    <property type="method" value="EM"/>
    <property type="resolution" value="12.00 A"/>
    <property type="chains" value="A/B/C/D/E/F=123-948"/>
</dbReference>
<dbReference type="PDB" id="7OXO">
    <property type="method" value="EM"/>
    <property type="resolution" value="3.90 A"/>
    <property type="chains" value="A/B/C/D/E/F=1-959"/>
</dbReference>
<dbReference type="PDB" id="7P09">
    <property type="method" value="EM"/>
    <property type="resolution" value="2.70 A"/>
    <property type="chains" value="A/B/C/D/E/F=67-949"/>
</dbReference>
<dbReference type="PDB" id="7P0B">
    <property type="method" value="EM"/>
    <property type="resolution" value="4.00 A"/>
    <property type="chains" value="A/B/C/D/E/F=67-949"/>
</dbReference>
<dbReference type="PDB" id="7P0M">
    <property type="method" value="EM"/>
    <property type="resolution" value="2.75 A"/>
    <property type="chains" value="A/B/C/D/E/F=67-959"/>
</dbReference>
<dbReference type="PDB" id="8OJL">
    <property type="method" value="EM"/>
    <property type="resolution" value="2.88 A"/>
    <property type="chains" value="A/B/C/D/E/F=121-959"/>
</dbReference>
<dbReference type="PDB" id="8OKA">
    <property type="method" value="EM"/>
    <property type="resolution" value="3.89 A"/>
    <property type="chains" value="A/B/C/D/E/F=115-959"/>
</dbReference>
<dbReference type="PDB" id="8OM7">
    <property type="method" value="EM"/>
    <property type="resolution" value="3.74 A"/>
    <property type="chains" value="A/B/C/D/E/F=115-959"/>
</dbReference>
<dbReference type="PDB" id="8OVF">
    <property type="method" value="EM"/>
    <property type="resolution" value="7.23 A"/>
    <property type="chains" value="A/B/C/D/E/F=115-959"/>
</dbReference>
<dbReference type="PDB" id="8OVG">
    <property type="method" value="EM"/>
    <property type="resolution" value="8.47 A"/>
    <property type="chains" value="A/B/C/D/E/F=115-959"/>
</dbReference>
<dbReference type="PDB" id="9CC0">
    <property type="method" value="EM"/>
    <property type="resolution" value="3.31 A"/>
    <property type="chains" value="A/B/C/D/E/F=115-959"/>
</dbReference>
<dbReference type="PDB" id="9CC3">
    <property type="method" value="EM"/>
    <property type="resolution" value="3.23 A"/>
    <property type="chains" value="A/B/C/D/E/F=115-959"/>
</dbReference>
<dbReference type="PDBsum" id="2X36"/>
<dbReference type="PDBsum" id="6WYS"/>
<dbReference type="PDBsum" id="6WZV"/>
<dbReference type="PDBsum" id="6X1M"/>
<dbReference type="PDBsum" id="6X27"/>
<dbReference type="PDBsum" id="7KRZ"/>
<dbReference type="PDBsum" id="7KSL"/>
<dbReference type="PDBsum" id="7KSM"/>
<dbReference type="PDBsum" id="7NFY"/>
<dbReference type="PDBsum" id="7NG4"/>
<dbReference type="PDBsum" id="7NG5"/>
<dbReference type="PDBsum" id="7NGC"/>
<dbReference type="PDBsum" id="7NGF"/>
<dbReference type="PDBsum" id="7NGL"/>
<dbReference type="PDBsum" id="7NGP"/>
<dbReference type="PDBsum" id="7NGQ"/>
<dbReference type="PDBsum" id="7OXO"/>
<dbReference type="PDBsum" id="7P09"/>
<dbReference type="PDBsum" id="7P0B"/>
<dbReference type="PDBsum" id="7P0M"/>
<dbReference type="PDBsum" id="8OJL"/>
<dbReference type="PDBsum" id="8OKA"/>
<dbReference type="PDBsum" id="8OM7"/>
<dbReference type="PDBsum" id="8OVF"/>
<dbReference type="PDBsum" id="8OVG"/>
<dbReference type="PDBsum" id="9CC0"/>
<dbReference type="PDBsum" id="9CC3"/>
<dbReference type="EMDB" id="EMD-12306"/>
<dbReference type="EMDB" id="EMD-12307"/>
<dbReference type="EMDB" id="EMD-12308"/>
<dbReference type="EMDB" id="EMD-12312"/>
<dbReference type="EMDB" id="EMD-12313"/>
<dbReference type="EMDB" id="EMD-12315"/>
<dbReference type="EMDB" id="EMD-12316"/>
<dbReference type="EMDB" id="EMD-12317"/>
<dbReference type="EMDB" id="EMD-13102"/>
<dbReference type="EMDB" id="EMD-13146"/>
<dbReference type="EMDB" id="EMD-13147"/>
<dbReference type="EMDB" id="EMD-13148"/>
<dbReference type="EMDB" id="EMD-16915"/>
<dbReference type="EMDB" id="EMD-16923"/>
<dbReference type="EMDB" id="EMD-16970"/>
<dbReference type="EMDB" id="EMD-17213"/>
<dbReference type="EMDB" id="EMD-17214"/>
<dbReference type="EMDB" id="EMD-23013"/>
<dbReference type="EMDB" id="EMD-23019"/>
<dbReference type="EMDB" id="EMD-23020"/>
<dbReference type="EMDB" id="EMD-23320"/>
<dbReference type="EMDB" id="EMD-3274"/>
<dbReference type="EMDB" id="EMD-3275"/>
<dbReference type="EMDB" id="EMD-45430"/>
<dbReference type="EMDB" id="EMD-45433"/>
<dbReference type="EMDB" id="EMD-45434"/>
<dbReference type="SMR" id="P36776"/>
<dbReference type="BioGRID" id="114762">
    <property type="interactions" value="505"/>
</dbReference>
<dbReference type="FunCoup" id="P36776">
    <property type="interactions" value="2738"/>
</dbReference>
<dbReference type="IntAct" id="P36776">
    <property type="interactions" value="180"/>
</dbReference>
<dbReference type="MINT" id="P36776"/>
<dbReference type="STRING" id="9606.ENSP00000353826"/>
<dbReference type="BindingDB" id="P36776"/>
<dbReference type="ChEMBL" id="CHEMBL4879436"/>
<dbReference type="DrugCentral" id="P36776"/>
<dbReference type="GuidetoPHARMACOLOGY" id="3180"/>
<dbReference type="MEROPS" id="S16.002"/>
<dbReference type="MoonDB" id="P36776">
    <property type="type" value="Curated"/>
</dbReference>
<dbReference type="GlyGen" id="P36776">
    <property type="glycosylation" value="2 sites, 1 O-linked glycan (1 site)"/>
</dbReference>
<dbReference type="iPTMnet" id="P36776"/>
<dbReference type="MetOSite" id="P36776"/>
<dbReference type="PhosphoSitePlus" id="P36776"/>
<dbReference type="SwissPalm" id="P36776"/>
<dbReference type="BioMuta" id="LONP1"/>
<dbReference type="DMDM" id="12644239"/>
<dbReference type="jPOST" id="P36776"/>
<dbReference type="MassIVE" id="P36776"/>
<dbReference type="PaxDb" id="9606-ENSP00000353826"/>
<dbReference type="PeptideAtlas" id="P36776"/>
<dbReference type="ProteomicsDB" id="24918"/>
<dbReference type="ProteomicsDB" id="55221">
    <molecule id="P36776-1"/>
</dbReference>
<dbReference type="Pumba" id="P36776"/>
<dbReference type="Antibodypedia" id="811">
    <property type="antibodies" value="299 antibodies from 30 providers"/>
</dbReference>
<dbReference type="DNASU" id="9361"/>
<dbReference type="Ensembl" id="ENST00000360614.8">
    <molecule id="P36776-1"/>
    <property type="protein sequence ID" value="ENSP00000353826.2"/>
    <property type="gene ID" value="ENSG00000196365.12"/>
</dbReference>
<dbReference type="Ensembl" id="ENST00000540670.6">
    <molecule id="P36776-3"/>
    <property type="protein sequence ID" value="ENSP00000441523.1"/>
    <property type="gene ID" value="ENSG00000196365.12"/>
</dbReference>
<dbReference type="Ensembl" id="ENST00000593119.5">
    <molecule id="P36776-2"/>
    <property type="protein sequence ID" value="ENSP00000468541.1"/>
    <property type="gene ID" value="ENSG00000196365.12"/>
</dbReference>
<dbReference type="GeneID" id="9361"/>
<dbReference type="KEGG" id="hsa:9361"/>
<dbReference type="MANE-Select" id="ENST00000360614.8">
    <property type="protein sequence ID" value="ENSP00000353826.2"/>
    <property type="RefSeq nucleotide sequence ID" value="NM_004793.4"/>
    <property type="RefSeq protein sequence ID" value="NP_004784.2"/>
</dbReference>
<dbReference type="UCSC" id="uc002mcx.5">
    <molecule id="P36776-1"/>
    <property type="organism name" value="human"/>
</dbReference>
<dbReference type="AGR" id="HGNC:9479"/>
<dbReference type="CTD" id="9361"/>
<dbReference type="DisGeNET" id="9361"/>
<dbReference type="GeneCards" id="LONP1"/>
<dbReference type="HGNC" id="HGNC:9479">
    <property type="gene designation" value="LONP1"/>
</dbReference>
<dbReference type="HPA" id="ENSG00000196365">
    <property type="expression patterns" value="Tissue enhanced (adrenal)"/>
</dbReference>
<dbReference type="MalaCards" id="LONP1"/>
<dbReference type="MIM" id="600373">
    <property type="type" value="phenotype"/>
</dbReference>
<dbReference type="MIM" id="605490">
    <property type="type" value="gene"/>
</dbReference>
<dbReference type="neXtProt" id="NX_P36776"/>
<dbReference type="OpenTargets" id="ENSG00000196365"/>
<dbReference type="Orphanet" id="1458">
    <property type="disease" value="CODAS syndrome"/>
</dbReference>
<dbReference type="Orphanet" id="2140">
    <property type="disease" value="Congenital diaphragmatic hernia"/>
</dbReference>
<dbReference type="Orphanet" id="79243">
    <property type="disease" value="Pyruvate dehydrogenase E1-alpha deficiency"/>
</dbReference>
<dbReference type="PharmGKB" id="PA162394145"/>
<dbReference type="VEuPathDB" id="HostDB:ENSG00000196365"/>
<dbReference type="eggNOG" id="KOG2004">
    <property type="taxonomic scope" value="Eukaryota"/>
</dbReference>
<dbReference type="GeneTree" id="ENSGT00530000063553"/>
<dbReference type="HOGENOM" id="CLU_004109_1_1_1"/>
<dbReference type="InParanoid" id="P36776"/>
<dbReference type="OMA" id="WLTNIPW"/>
<dbReference type="OrthoDB" id="2411602at2759"/>
<dbReference type="PAN-GO" id="P36776">
    <property type="GO annotations" value="6 GO annotations based on evolutionary models"/>
</dbReference>
<dbReference type="PhylomeDB" id="P36776"/>
<dbReference type="TreeFam" id="TF105001"/>
<dbReference type="BRENDA" id="3.4.21.53">
    <property type="organism ID" value="2681"/>
</dbReference>
<dbReference type="PathwayCommons" id="P36776"/>
<dbReference type="Reactome" id="R-HSA-9837999">
    <property type="pathway name" value="Mitochondrial protein degradation"/>
</dbReference>
<dbReference type="Reactome" id="R-HSA-9841251">
    <property type="pathway name" value="Mitochondrial unfolded protein response (UPRmt)"/>
</dbReference>
<dbReference type="SignaLink" id="P36776"/>
<dbReference type="SIGNOR" id="P36776"/>
<dbReference type="BioGRID-ORCS" id="9361">
    <property type="hits" value="817 hits in 1165 CRISPR screens"/>
</dbReference>
<dbReference type="CD-CODE" id="91857CE7">
    <property type="entry name" value="Nucleolus"/>
</dbReference>
<dbReference type="CD-CODE" id="FB4E32DD">
    <property type="entry name" value="Presynaptic clusters and postsynaptic densities"/>
</dbReference>
<dbReference type="ChiTaRS" id="LONP1">
    <property type="organism name" value="human"/>
</dbReference>
<dbReference type="EvolutionaryTrace" id="P36776"/>
<dbReference type="GeneWiki" id="LONP1"/>
<dbReference type="GenomeRNAi" id="9361"/>
<dbReference type="Pharos" id="P36776">
    <property type="development level" value="Tchem"/>
</dbReference>
<dbReference type="PRO" id="PR:P36776"/>
<dbReference type="Proteomes" id="UP000005640">
    <property type="component" value="Chromosome 19"/>
</dbReference>
<dbReference type="RNAct" id="P36776">
    <property type="molecule type" value="protein"/>
</dbReference>
<dbReference type="Bgee" id="ENSG00000196365">
    <property type="expression patterns" value="Expressed in right adrenal gland and 193 other cell types or tissues"/>
</dbReference>
<dbReference type="ExpressionAtlas" id="P36776">
    <property type="expression patterns" value="baseline and differential"/>
</dbReference>
<dbReference type="GO" id="GO:0005829">
    <property type="term" value="C:cytosol"/>
    <property type="evidence" value="ECO:0000314"/>
    <property type="project" value="HPA"/>
</dbReference>
<dbReference type="GO" id="GO:0016020">
    <property type="term" value="C:membrane"/>
    <property type="evidence" value="ECO:0007005"/>
    <property type="project" value="UniProtKB"/>
</dbReference>
<dbReference type="GO" id="GO:0005759">
    <property type="term" value="C:mitochondrial matrix"/>
    <property type="evidence" value="ECO:0000315"/>
    <property type="project" value="UniProtKB"/>
</dbReference>
<dbReference type="GO" id="GO:0042645">
    <property type="term" value="C:mitochondrial nucleoid"/>
    <property type="evidence" value="ECO:0000314"/>
    <property type="project" value="BHF-UCL"/>
</dbReference>
<dbReference type="GO" id="GO:0005739">
    <property type="term" value="C:mitochondrion"/>
    <property type="evidence" value="ECO:0000314"/>
    <property type="project" value="HPA"/>
</dbReference>
<dbReference type="GO" id="GO:0005654">
    <property type="term" value="C:nucleoplasm"/>
    <property type="evidence" value="ECO:0000314"/>
    <property type="project" value="HPA"/>
</dbReference>
<dbReference type="GO" id="GO:0043531">
    <property type="term" value="F:ADP binding"/>
    <property type="evidence" value="ECO:0000314"/>
    <property type="project" value="UniProtKB"/>
</dbReference>
<dbReference type="GO" id="GO:0005524">
    <property type="term" value="F:ATP binding"/>
    <property type="evidence" value="ECO:0000314"/>
    <property type="project" value="UniProtKB"/>
</dbReference>
<dbReference type="GO" id="GO:0016887">
    <property type="term" value="F:ATP hydrolysis activity"/>
    <property type="evidence" value="ECO:0007669"/>
    <property type="project" value="UniProtKB-UniRule"/>
</dbReference>
<dbReference type="GO" id="GO:0004176">
    <property type="term" value="F:ATP-dependent peptidase activity"/>
    <property type="evidence" value="ECO:0000314"/>
    <property type="project" value="UniProtKB"/>
</dbReference>
<dbReference type="GO" id="GO:0070182">
    <property type="term" value="F:DNA polymerase binding"/>
    <property type="evidence" value="ECO:0000353"/>
    <property type="project" value="UniProtKB"/>
</dbReference>
<dbReference type="GO" id="GO:0051880">
    <property type="term" value="F:G-quadruplex DNA binding"/>
    <property type="evidence" value="ECO:0000314"/>
    <property type="project" value="UniProtKB"/>
</dbReference>
<dbReference type="GO" id="GO:0042802">
    <property type="term" value="F:identical protein binding"/>
    <property type="evidence" value="ECO:0000353"/>
    <property type="project" value="IntAct"/>
</dbReference>
<dbReference type="GO" id="GO:0043560">
    <property type="term" value="F:insulin receptor substrate binding"/>
    <property type="evidence" value="ECO:0007669"/>
    <property type="project" value="Ensembl"/>
</dbReference>
<dbReference type="GO" id="GO:0042731">
    <property type="term" value="F:PH domain binding"/>
    <property type="evidence" value="ECO:0007669"/>
    <property type="project" value="Ensembl"/>
</dbReference>
<dbReference type="GO" id="GO:0043565">
    <property type="term" value="F:sequence-specific DNA binding"/>
    <property type="evidence" value="ECO:0000314"/>
    <property type="project" value="UniProtKB"/>
</dbReference>
<dbReference type="GO" id="GO:0004252">
    <property type="term" value="F:serine-type endopeptidase activity"/>
    <property type="evidence" value="ECO:0007669"/>
    <property type="project" value="UniProtKB-UniRule"/>
</dbReference>
<dbReference type="GO" id="GO:0003697">
    <property type="term" value="F:single-stranded DNA binding"/>
    <property type="evidence" value="ECO:0000318"/>
    <property type="project" value="GO_Central"/>
</dbReference>
<dbReference type="GO" id="GO:0003727">
    <property type="term" value="F:single-stranded RNA binding"/>
    <property type="evidence" value="ECO:0000314"/>
    <property type="project" value="UniProtKB"/>
</dbReference>
<dbReference type="GO" id="GO:0034599">
    <property type="term" value="P:cellular response to oxidative stress"/>
    <property type="evidence" value="ECO:0000314"/>
    <property type="project" value="UniProtKB"/>
</dbReference>
<dbReference type="GO" id="GO:0051131">
    <property type="term" value="P:chaperone-mediated protein complex assembly"/>
    <property type="evidence" value="ECO:0000318"/>
    <property type="project" value="GO_Central"/>
</dbReference>
<dbReference type="GO" id="GO:0032042">
    <property type="term" value="P:mitochondrial DNA metabolic process"/>
    <property type="evidence" value="ECO:0000303"/>
    <property type="project" value="UniProtKB"/>
</dbReference>
<dbReference type="GO" id="GO:0000002">
    <property type="term" value="P:mitochondrial genome maintenance"/>
    <property type="evidence" value="ECO:0000303"/>
    <property type="project" value="UniProtKB"/>
</dbReference>
<dbReference type="GO" id="GO:0035694">
    <property type="term" value="P:mitochondrial protein catabolic process"/>
    <property type="evidence" value="ECO:0000304"/>
    <property type="project" value="Reactome"/>
</dbReference>
<dbReference type="GO" id="GO:0007005">
    <property type="term" value="P:mitochondrion organization"/>
    <property type="evidence" value="ECO:0000315"/>
    <property type="project" value="UniProtKB"/>
</dbReference>
<dbReference type="GO" id="GO:0046627">
    <property type="term" value="P:negative regulation of insulin receptor signaling pathway"/>
    <property type="evidence" value="ECO:0007669"/>
    <property type="project" value="Ensembl"/>
</dbReference>
<dbReference type="GO" id="GO:0070407">
    <property type="term" value="P:oxidation-dependent protein catabolic process"/>
    <property type="evidence" value="ECO:0000315"/>
    <property type="project" value="UniProtKB"/>
</dbReference>
<dbReference type="GO" id="GO:0030163">
    <property type="term" value="P:protein catabolic process"/>
    <property type="evidence" value="ECO:0000314"/>
    <property type="project" value="UniProtKB"/>
</dbReference>
<dbReference type="GO" id="GO:0006515">
    <property type="term" value="P:protein quality control for misfolded or incompletely synthesized proteins"/>
    <property type="evidence" value="ECO:0000318"/>
    <property type="project" value="GO_Central"/>
</dbReference>
<dbReference type="GO" id="GO:0051603">
    <property type="term" value="P:proteolysis involved in protein catabolic process"/>
    <property type="evidence" value="ECO:0000314"/>
    <property type="project" value="UniProtKB"/>
</dbReference>
<dbReference type="GO" id="GO:0010044">
    <property type="term" value="P:response to aluminum ion"/>
    <property type="evidence" value="ECO:0007669"/>
    <property type="project" value="Ensembl"/>
</dbReference>
<dbReference type="GO" id="GO:0009725">
    <property type="term" value="P:response to hormone"/>
    <property type="evidence" value="ECO:0007669"/>
    <property type="project" value="Ensembl"/>
</dbReference>
<dbReference type="GO" id="GO:0001666">
    <property type="term" value="P:response to hypoxia"/>
    <property type="evidence" value="ECO:0000270"/>
    <property type="project" value="UniProtKB"/>
</dbReference>
<dbReference type="CDD" id="cd19500">
    <property type="entry name" value="RecA-like_Lon"/>
    <property type="match status" value="1"/>
</dbReference>
<dbReference type="FunFam" id="3.40.50.300:FF:000021">
    <property type="entry name" value="Lon protease homolog"/>
    <property type="match status" value="1"/>
</dbReference>
<dbReference type="FunFam" id="1.10.8.60:FF:000043">
    <property type="entry name" value="Lon protease homolog, mitochondrial"/>
    <property type="match status" value="1"/>
</dbReference>
<dbReference type="FunFam" id="1.20.5.5270:FF:000001">
    <property type="entry name" value="Lon protease homolog, mitochondrial"/>
    <property type="match status" value="1"/>
</dbReference>
<dbReference type="FunFam" id="1.20.58.1480:FF:000002">
    <property type="entry name" value="Lon protease homolog, mitochondrial"/>
    <property type="match status" value="1"/>
</dbReference>
<dbReference type="FunFam" id="2.30.130.40:FF:000004">
    <property type="entry name" value="Lon protease homolog, mitochondrial"/>
    <property type="match status" value="1"/>
</dbReference>
<dbReference type="FunFam" id="3.30.230.10:FF:000015">
    <property type="entry name" value="Lon protease homolog, mitochondrial"/>
    <property type="match status" value="1"/>
</dbReference>
<dbReference type="Gene3D" id="1.10.8.60">
    <property type="match status" value="1"/>
</dbReference>
<dbReference type="Gene3D" id="1.20.5.5270">
    <property type="match status" value="1"/>
</dbReference>
<dbReference type="Gene3D" id="1.20.58.1480">
    <property type="match status" value="1"/>
</dbReference>
<dbReference type="Gene3D" id="3.30.230.10">
    <property type="match status" value="1"/>
</dbReference>
<dbReference type="Gene3D" id="2.30.130.40">
    <property type="entry name" value="LON domain-like"/>
    <property type="match status" value="1"/>
</dbReference>
<dbReference type="Gene3D" id="3.40.50.300">
    <property type="entry name" value="P-loop containing nucleotide triphosphate hydrolases"/>
    <property type="match status" value="1"/>
</dbReference>
<dbReference type="HAMAP" id="MF_03120">
    <property type="entry name" value="lonm_euk"/>
    <property type="match status" value="1"/>
</dbReference>
<dbReference type="InterPro" id="IPR003593">
    <property type="entry name" value="AAA+_ATPase"/>
</dbReference>
<dbReference type="InterPro" id="IPR003959">
    <property type="entry name" value="ATPase_AAA_core"/>
</dbReference>
<dbReference type="InterPro" id="IPR004815">
    <property type="entry name" value="Lon_bac/euk-typ"/>
</dbReference>
<dbReference type="InterPro" id="IPR054594">
    <property type="entry name" value="Lon_lid"/>
</dbReference>
<dbReference type="InterPro" id="IPR008269">
    <property type="entry name" value="Lon_proteolytic"/>
</dbReference>
<dbReference type="InterPro" id="IPR027065">
    <property type="entry name" value="Lon_Prtase"/>
</dbReference>
<dbReference type="InterPro" id="IPR003111">
    <property type="entry name" value="Lon_prtase_N"/>
</dbReference>
<dbReference type="InterPro" id="IPR046336">
    <property type="entry name" value="Lon_prtase_N_sf"/>
</dbReference>
<dbReference type="InterPro" id="IPR027503">
    <property type="entry name" value="Lonm_euk"/>
</dbReference>
<dbReference type="InterPro" id="IPR027417">
    <property type="entry name" value="P-loop_NTPase"/>
</dbReference>
<dbReference type="InterPro" id="IPR008268">
    <property type="entry name" value="Peptidase_S16_AS"/>
</dbReference>
<dbReference type="InterPro" id="IPR015947">
    <property type="entry name" value="PUA-like_sf"/>
</dbReference>
<dbReference type="InterPro" id="IPR020568">
    <property type="entry name" value="Ribosomal_Su5_D2-typ_SF"/>
</dbReference>
<dbReference type="InterPro" id="IPR014721">
    <property type="entry name" value="Ribsml_uS5_D2-typ_fold_subgr"/>
</dbReference>
<dbReference type="NCBIfam" id="TIGR00763">
    <property type="entry name" value="lon"/>
    <property type="match status" value="1"/>
</dbReference>
<dbReference type="PANTHER" id="PTHR43718">
    <property type="entry name" value="LON PROTEASE"/>
    <property type="match status" value="1"/>
</dbReference>
<dbReference type="PANTHER" id="PTHR43718:SF2">
    <property type="entry name" value="LON PROTEASE HOMOLOG, MITOCHONDRIAL"/>
    <property type="match status" value="1"/>
</dbReference>
<dbReference type="Pfam" id="PF00004">
    <property type="entry name" value="AAA"/>
    <property type="match status" value="1"/>
</dbReference>
<dbReference type="Pfam" id="PF05362">
    <property type="entry name" value="Lon_C"/>
    <property type="match status" value="1"/>
</dbReference>
<dbReference type="Pfam" id="PF22667">
    <property type="entry name" value="Lon_lid"/>
    <property type="match status" value="1"/>
</dbReference>
<dbReference type="Pfam" id="PF02190">
    <property type="entry name" value="LON_substr_bdg"/>
    <property type="match status" value="1"/>
</dbReference>
<dbReference type="PRINTS" id="PR00830">
    <property type="entry name" value="ENDOLAPTASE"/>
</dbReference>
<dbReference type="SMART" id="SM00382">
    <property type="entry name" value="AAA"/>
    <property type="match status" value="1"/>
</dbReference>
<dbReference type="SMART" id="SM00464">
    <property type="entry name" value="LON"/>
    <property type="match status" value="1"/>
</dbReference>
<dbReference type="SUPFAM" id="SSF52540">
    <property type="entry name" value="P-loop containing nucleoside triphosphate hydrolases"/>
    <property type="match status" value="1"/>
</dbReference>
<dbReference type="SUPFAM" id="SSF88697">
    <property type="entry name" value="PUA domain-like"/>
    <property type="match status" value="1"/>
</dbReference>
<dbReference type="SUPFAM" id="SSF54211">
    <property type="entry name" value="Ribosomal protein S5 domain 2-like"/>
    <property type="match status" value="1"/>
</dbReference>
<dbReference type="PROSITE" id="PS51787">
    <property type="entry name" value="LON_N"/>
    <property type="match status" value="1"/>
</dbReference>
<dbReference type="PROSITE" id="PS51786">
    <property type="entry name" value="LON_PROTEOLYTIC"/>
    <property type="match status" value="1"/>
</dbReference>
<dbReference type="PROSITE" id="PS01046">
    <property type="entry name" value="LON_SER"/>
    <property type="match status" value="1"/>
</dbReference>
<evidence type="ECO:0000255" key="1">
    <source>
        <dbReference type="HAMAP-Rule" id="MF_03120"/>
    </source>
</evidence>
<evidence type="ECO:0000255" key="2">
    <source>
        <dbReference type="PROSITE-ProRule" id="PRU01122"/>
    </source>
</evidence>
<evidence type="ECO:0000255" key="3">
    <source>
        <dbReference type="PROSITE-ProRule" id="PRU01123"/>
    </source>
</evidence>
<evidence type="ECO:0000256" key="4">
    <source>
        <dbReference type="SAM" id="MobiDB-lite"/>
    </source>
</evidence>
<evidence type="ECO:0000269" key="5">
    <source>
    </source>
</evidence>
<evidence type="ECO:0000269" key="6">
    <source>
    </source>
</evidence>
<evidence type="ECO:0000269" key="7">
    <source>
    </source>
</evidence>
<evidence type="ECO:0000269" key="8">
    <source>
    </source>
</evidence>
<evidence type="ECO:0000269" key="9">
    <source>
    </source>
</evidence>
<evidence type="ECO:0000269" key="10">
    <source>
    </source>
</evidence>
<evidence type="ECO:0000269" key="11">
    <source>
    </source>
</evidence>
<evidence type="ECO:0000269" key="12">
    <source>
    </source>
</evidence>
<evidence type="ECO:0000269" key="13">
    <source>
    </source>
</evidence>
<evidence type="ECO:0000269" key="14">
    <source>
    </source>
</evidence>
<evidence type="ECO:0000269" key="15">
    <source>
    </source>
</evidence>
<evidence type="ECO:0000269" key="16">
    <source>
    </source>
</evidence>
<evidence type="ECO:0000269" key="17">
    <source>
    </source>
</evidence>
<evidence type="ECO:0000269" key="18">
    <source>
    </source>
</evidence>
<evidence type="ECO:0000269" key="19">
    <source>
    </source>
</evidence>
<evidence type="ECO:0000269" key="20">
    <source>
    </source>
</evidence>
<evidence type="ECO:0000269" key="21">
    <source>
    </source>
</evidence>
<evidence type="ECO:0000303" key="22">
    <source>
    </source>
</evidence>
<evidence type="ECO:0000305" key="23"/>
<evidence type="ECO:0000305" key="24">
    <source>
    </source>
</evidence>
<evidence type="ECO:0007744" key="25">
    <source>
    </source>
</evidence>
<evidence type="ECO:0007829" key="26">
    <source>
        <dbReference type="PDB" id="2X36"/>
    </source>
</evidence>
<evidence type="ECO:0007829" key="27">
    <source>
        <dbReference type="PDB" id="6WZV"/>
    </source>
</evidence>
<evidence type="ECO:0007829" key="28">
    <source>
        <dbReference type="PDB" id="6X27"/>
    </source>
</evidence>
<evidence type="ECO:0007829" key="29">
    <source>
        <dbReference type="PDB" id="7KRZ"/>
    </source>
</evidence>
<evidence type="ECO:0007829" key="30">
    <source>
        <dbReference type="PDB" id="7KSL"/>
    </source>
</evidence>
<evidence type="ECO:0007829" key="31">
    <source>
        <dbReference type="PDB" id="7P09"/>
    </source>
</evidence>
<evidence type="ECO:0007829" key="32">
    <source>
        <dbReference type="PDB" id="7P0M"/>
    </source>
</evidence>
<evidence type="ECO:0007829" key="33">
    <source>
        <dbReference type="PDB" id="8OJL"/>
    </source>
</evidence>
<evidence type="ECO:0007829" key="34">
    <source>
        <dbReference type="PDB" id="9CC3"/>
    </source>
</evidence>
<proteinExistence type="evidence at protein level"/>
<name>LONM_HUMAN</name>
<organism>
    <name type="scientific">Homo sapiens</name>
    <name type="common">Human</name>
    <dbReference type="NCBI Taxonomy" id="9606"/>
    <lineage>
        <taxon>Eukaryota</taxon>
        <taxon>Metazoa</taxon>
        <taxon>Chordata</taxon>
        <taxon>Craniata</taxon>
        <taxon>Vertebrata</taxon>
        <taxon>Euteleostomi</taxon>
        <taxon>Mammalia</taxon>
        <taxon>Eutheria</taxon>
        <taxon>Euarchontoglires</taxon>
        <taxon>Primates</taxon>
        <taxon>Haplorrhini</taxon>
        <taxon>Catarrhini</taxon>
        <taxon>Hominidae</taxon>
        <taxon>Homo</taxon>
    </lineage>
</organism>